<gene>
    <name type="primary">FOXP3</name>
    <name type="synonym">IPEX</name>
    <name type="ORF">JM2</name>
</gene>
<feature type="chain" id="PRO_0000091886" description="Forkhead box protein P3">
    <location>
        <begin position="1"/>
        <end position="431"/>
    </location>
</feature>
<feature type="chain" id="PRO_0000432430" description="Forkhead box protein P3, C-terminally processed" evidence="36">
    <location>
        <begin position="1"/>
        <end position="417"/>
    </location>
</feature>
<feature type="chain" id="PRO_0000432431" description="Forkhead box protein P3 41 kDa form" evidence="36">
    <location>
        <begin position="52"/>
        <end position="417"/>
    </location>
</feature>
<feature type="propeptide" id="PRO_0000432432" evidence="36">
    <location>
        <begin position="418"/>
        <end position="431"/>
    </location>
</feature>
<feature type="zinc finger region" description="C2H2-type">
    <location>
        <begin position="197"/>
        <end position="222"/>
    </location>
</feature>
<feature type="DNA-binding region" description="Fork-head" evidence="2">
    <location>
        <begin position="337"/>
        <end position="423"/>
    </location>
</feature>
<feature type="region of interest" description="Disordered" evidence="3">
    <location>
        <begin position="1"/>
        <end position="68"/>
    </location>
</feature>
<feature type="region of interest" description="Interaction with ZFP90" evidence="21">
    <location>
        <begin position="106"/>
        <end position="198"/>
    </location>
</feature>
<feature type="region of interest" description="Essential for transcriptional repressor activity and for interaction with KAT5 and HDAC7" evidence="9">
    <location>
        <begin position="106"/>
        <end position="190"/>
    </location>
</feature>
<feature type="region of interest" description="Interaction with IKZF4" evidence="1">
    <location>
        <begin position="149"/>
        <end position="199"/>
    </location>
</feature>
<feature type="region of interest" description="Leucine-zipper">
    <location>
        <begin position="239"/>
        <end position="260"/>
    </location>
</feature>
<feature type="region of interest" description="Interaction with RUNX1" evidence="10">
    <location>
        <begin position="278"/>
        <end position="336"/>
    </location>
</feature>
<feature type="short sequence motif" description="Nuclear export signal" evidence="18">
    <location>
        <begin position="68"/>
        <end position="76"/>
    </location>
</feature>
<feature type="short sequence motif" description="LXXLL motif" evidence="11">
    <location>
        <begin position="92"/>
        <end position="96"/>
    </location>
</feature>
<feature type="short sequence motif" description="Nuclear export signal" evidence="18">
    <location>
        <begin position="239"/>
        <end position="248"/>
    </location>
</feature>
<feature type="short sequence motif" description="Nuclear localization signal" evidence="18">
    <location>
        <begin position="414"/>
        <end position="417"/>
    </location>
</feature>
<feature type="compositionally biased region" description="Low complexity" evidence="3">
    <location>
        <begin position="10"/>
        <end position="25"/>
    </location>
</feature>
<feature type="site" description="Cleavage" evidence="14">
    <location>
        <begin position="51"/>
        <end position="52"/>
    </location>
</feature>
<feature type="site" description="Cleavage; by PCSK1 or PCSK2" evidence="14">
    <location>
        <begin position="417"/>
        <end position="418"/>
    </location>
</feature>
<feature type="modified residue" description="Phosphoserine; by CDK2" evidence="1">
    <location>
        <position position="19"/>
    </location>
</feature>
<feature type="modified residue" description="N6-acetyllysine" evidence="17">
    <location>
        <position position="31"/>
    </location>
</feature>
<feature type="modified residue" description="N6-acetyllysine; alternate" evidence="17">
    <location>
        <position position="263"/>
    </location>
</feature>
<feature type="modified residue" description="N6-acetyllysine; alternate" evidence="17">
    <location>
        <position position="268"/>
    </location>
</feature>
<feature type="modified residue" description="Phosphoserine" evidence="20">
    <location>
        <position position="418"/>
    </location>
</feature>
<feature type="cross-link" description="Glycyl lysine isopeptide (Lys-Gly) (interchain with G-Cter in ubiquitin)" evidence="1">
    <location>
        <position position="250"/>
    </location>
</feature>
<feature type="cross-link" description="Glycyl lysine isopeptide (Lys-Gly) (interchain with G-Cter in ubiquitin)" evidence="1">
    <location>
        <position position="252"/>
    </location>
</feature>
<feature type="cross-link" description="Glycyl lysine isopeptide (Lys-Gly) (interchain with G-Cter in ubiquitin); alternate" evidence="1">
    <location>
        <position position="263"/>
    </location>
</feature>
<feature type="cross-link" description="Glycyl lysine isopeptide (Lys-Gly) (interchain with G-Cter in ubiquitin); alternate" evidence="1">
    <location>
        <position position="268"/>
    </location>
</feature>
<feature type="cross-link" description="Glycyl lysine isopeptide (Lys-Gly) (interchain with G-Cter in ubiquitin)" evidence="1">
    <location>
        <position position="393"/>
    </location>
</feature>
<feature type="splice variant" id="VSP_015796" description="In isoform 2 and isoform 3." evidence="28 33 34">
    <location>
        <begin position="72"/>
        <end position="106"/>
    </location>
</feature>
<feature type="splice variant" id="VSP_047859" description="In isoform 4." evidence="32">
    <location>
        <begin position="246"/>
        <end position="272"/>
    </location>
</feature>
<feature type="splice variant" id="VSP_036418" description="In isoform 3." evidence="34">
    <original>K</original>
    <variation>KVSSSEVAVTGMASSAIAAQSGQAWVWAHRHIGEERDVGCWWWLLASEVDAHLLPVPGLPQ</variation>
    <location>
        <position position="382"/>
    </location>
</feature>
<feature type="sequence variant" id="VAR_078971" description="In IPEX; mild phenotype; no loss of protein expression." evidence="13">
    <original>L</original>
    <variation>P</variation>
    <location>
        <position position="242"/>
    </location>
</feature>
<feature type="sequence variant" id="VAR_011330" description="In IPEX; significantly reduces dimerization; dbSNP:rs122467171." evidence="4 16">
    <location>
        <position position="251"/>
    </location>
</feature>
<feature type="sequence variant" id="VAR_078972" description="In IPEX; mild phenotype; no loss of protein expression; dbSNP:rs122467173." evidence="13">
    <original>F</original>
    <variation>L</variation>
    <location>
        <position position="324"/>
    </location>
</feature>
<feature type="sequence variant" id="VAR_078973" description="In IPEX; no loss of protein expression; dbSNP:rs886044787." evidence="13">
    <original>P</original>
    <variation>A</variation>
    <location>
        <position position="339"/>
    </location>
</feature>
<feature type="sequence variant" id="VAR_078974" description="In IPEX; mild phenotype; no loss of protein expression; impairs its ability to confer inhibitory function to regulatory T-cells; dbSNP:rs1557115786." evidence="13 16">
    <original>R</original>
    <variation>H</variation>
    <location>
        <position position="347"/>
    </location>
</feature>
<feature type="sequence variant" id="VAR_023569" description="In IPEX; dbSNP:rs2147944391." evidence="7">
    <original>I</original>
    <variation>V</variation>
    <location>
        <position position="363"/>
    </location>
</feature>
<feature type="sequence variant" id="VAR_011331" description="In IPEX; no effect on dimerization; dbSNP:rs122467169." evidence="5 16">
    <original>F</original>
    <variation>C</variation>
    <location>
        <position position="371"/>
    </location>
</feature>
<feature type="sequence variant" id="VAR_078975" description="In IPEX; no loss of protein expression; disrupts dimerization; impairs its ability to confer inhibitory function to regulatory T-cells; requires 2 nucleotide substitutions; dbSNP:rs122467172." evidence="13 16">
    <original>F</original>
    <variation>A</variation>
    <location>
        <position position="373"/>
    </location>
</feature>
<feature type="sequence variant" id="VAR_078976" description="In IPEX; no loss of protein expression." evidence="13">
    <original>F</original>
    <variation>C</variation>
    <location>
        <position position="374"/>
    </location>
</feature>
<feature type="sequence variant" id="VAR_011332" description="In IPEX; no loss of protein expression; dbSNP:rs122467170." evidence="5 6 13">
    <original>A</original>
    <variation>T</variation>
    <location>
        <position position="384"/>
    </location>
</feature>
<feature type="sequence variant" id="VAR_011333" description="In IPEX; dbSNP:rs28935477." evidence="5">
    <original>R</original>
    <variation>W</variation>
    <location>
        <position position="397"/>
    </location>
</feature>
<feature type="mutagenesis site" description="Decrease in nuclear export; when associated with A-71, A-74 and A-76." evidence="18">
    <original>L</original>
    <variation>A</variation>
    <location>
        <position position="69"/>
    </location>
</feature>
<feature type="mutagenesis site" description="Decrease in nuclear export; when associated with A-69, A-74 and A-76." evidence="18">
    <original>L</original>
    <variation>A</variation>
    <location>
        <position position="71"/>
    </location>
</feature>
<feature type="mutagenesis site" description="Decrease in nuclear export; when associated with A-69, A-71 and A-76." evidence="18">
    <original>L</original>
    <variation>A</variation>
    <location>
        <position position="74"/>
    </location>
</feature>
<feature type="mutagenesis site" description="Decrease in nuclear export; when associated with A-69, A-71 and A-74." evidence="18">
    <original>L</original>
    <variation>A</variation>
    <location>
        <position position="76"/>
    </location>
</feature>
<feature type="mutagenesis site" description="Loss of interaction with RORA." evidence="11">
    <original>LL</original>
    <variation>AA</variation>
    <location>
        <begin position="95"/>
        <end position="96"/>
    </location>
</feature>
<feature type="mutagenesis site" description="Decrease in nuclear export; when associated with A-246 and A-248." evidence="18">
    <original>L</original>
    <variation>A</variation>
    <location>
        <position position="242"/>
    </location>
</feature>
<feature type="mutagenesis site" description="Decrease in nuclear export; when associated with A-242 and A-248." evidence="18">
    <original>L</original>
    <variation>A</variation>
    <location>
        <position position="246"/>
    </location>
</feature>
<feature type="mutagenesis site" description="Decrease in nuclear export; when associated with A-242 and A-246." evidence="18">
    <original>L</original>
    <variation>A</variation>
    <location>
        <position position="248"/>
    </location>
</feature>
<feature type="mutagenesis site" description="No loss of DNA-binding. Disrupts dimerization but does not affect DNA-binding; when associated with T-370. Disrupts dimerization, does not affect DNA-binding, causes dysregulated expression of a subset of FOXP3 target genes and impairs its ability to confer inhibitory function to regulatory T-cells; when associated with T-370 and P-372." evidence="16">
    <original>W</original>
    <variation>Q</variation>
    <location>
        <position position="348"/>
    </location>
</feature>
<feature type="mutagenesis site" description="Disrupts dimerization but does not affect DNA-binding; when associated with Q-348. Disrupts dimerization, does not affect DNA-binding, causes dysregulated expression of a subset of FOXP3 target genes and impairs its ability to confer inhibitory function to regulatory T-cells; when associated with Q-348 and P-372." evidence="16">
    <original>M</original>
    <variation>T</variation>
    <location>
        <position position="370"/>
    </location>
</feature>
<feature type="mutagenesis site" description="Disrupts dimerization, does not affect DNA-binding, causes dysregulated expression of a subset of FOXP3 target genes and impairs its ability to confer inhibitory function to regulatory T-cells; when associated with Q-348 and T-370." evidence="16">
    <original>A</original>
    <variation>P</variation>
    <location>
        <position position="372"/>
    </location>
</feature>
<feature type="mutagenesis site" description="Loss of nuclear localization." evidence="18">
    <original>KK</original>
    <variation>EE</variation>
    <location>
        <begin position="415"/>
        <end position="416"/>
    </location>
</feature>
<feature type="mutagenesis site" description="Decrease in phosphorylation, significant decrease in transcriptional repressor activity and reduced interaction with PP1CA, PP1CB and PP1CG. Significant decrease in phosphorylation and transcriptional repressor activity; when associated with A-422." evidence="20">
    <original>S</original>
    <variation>A</variation>
    <location>
        <position position="418"/>
    </location>
</feature>
<feature type="mutagenesis site" description="Slight increase in transcriptional repressor activity." evidence="20">
    <original>S</original>
    <variation>E</variation>
    <location>
        <position position="418"/>
    </location>
</feature>
<feature type="mutagenesis site" description="Significant decrease in phosphorylation and transcriptional repressor activity; when associated with A-418." evidence="20">
    <original>S</original>
    <variation>A</variation>
    <location>
        <position position="422"/>
    </location>
</feature>
<feature type="sequence conflict" description="In Ref. 7; CAA06748." evidence="35" ref="7">
    <original>LGPSP</original>
    <variation>MSPIS</variation>
    <location>
        <begin position="16"/>
        <end position="20"/>
    </location>
</feature>
<feature type="helix" evidence="39">
    <location>
        <begin position="342"/>
        <end position="351"/>
    </location>
</feature>
<feature type="helix" evidence="39">
    <location>
        <begin position="360"/>
        <end position="371"/>
    </location>
</feature>
<feature type="turn" evidence="39">
    <location>
        <begin position="372"/>
        <end position="375"/>
    </location>
</feature>
<feature type="helix" evidence="39">
    <location>
        <begin position="381"/>
        <end position="391"/>
    </location>
</feature>
<feature type="strand" evidence="39">
    <location>
        <begin position="395"/>
        <end position="398"/>
    </location>
</feature>
<feature type="strand" evidence="39">
    <location>
        <begin position="401"/>
        <end position="403"/>
    </location>
</feature>
<feature type="strand" evidence="39">
    <location>
        <begin position="405"/>
        <end position="408"/>
    </location>
</feature>
<feature type="helix" evidence="39">
    <location>
        <begin position="410"/>
        <end position="416"/>
    </location>
</feature>
<comment type="function">
    <text evidence="1 8 9 10 11 12 16 19 24 26 27 29 30 31">Transcriptional regulator which is crucial for the development and inhibitory function of regulatory T-cells (Treg) (PubMed:17377532, PubMed:21458306, PubMed:23947341, PubMed:24354325, PubMed:24722479, PubMed:24835996, PubMed:30513302, PubMed:32644293). Plays an essential role in maintaining homeostasis of the immune system by allowing the acquisition of full suppressive function and stability of the Treg lineage, and by directly modulating the expansion and function of conventional T-cells (PubMed:23169781). Can act either as a transcriptional repressor or a transcriptional activator depending on its interactions with other transcription factors, histone acetylases and deacetylases (PubMed:17377532, PubMed:21458306, PubMed:23947341, PubMed:24354325, PubMed:24722479). The suppressive activity of Treg involves the coordinate activation of many genes, including CTLA4 and TNFRSF18 by FOXP3 along with repression of genes encoding cytokines such as interleukin-2 (IL2) and interferon-gamma (IFNG) (PubMed:17377532, PubMed:21458306, PubMed:23947341, PubMed:24354325, PubMed:24722479). Inhibits cytokine production and T-cell effector function by repressing the activity of two key transcription factors, RELA and NFATC2 (PubMed:15790681). Mediates transcriptional repression of IL2 via its association with histone acetylase KAT5 and histone deacetylase HDAC7 (PubMed:17360565). Can activate the expression of TNFRSF18, IL2RA and CTLA4 and repress the expression of IL2 and IFNG via its association with transcription factor RUNX1 (PubMed:17377532). Inhibits the differentiation of IL17 producing helper T-cells (Th17) by antagonizing RORC function, leading to down-regulation of IL17 expression, favoring Treg development (PubMed:18368049). Inhibits the transcriptional activator activity of RORA (PubMed:18354202). Can repress the expression of IL2 and IFNG via its association with transcription factor IKZF4 (By similarity).</text>
</comment>
<comment type="subunit">
    <text evidence="1 8 9 10 11 12 15 16 20 21 22 23 25">Homodimer (PubMed:21458306, PubMed:25567984). Dimerization is essential for its transcriptional regulator activity (PubMed:21458306). Interacts with IKZF3. Isoform 1 (via LXXLL motif), but not isoform 2, interacts with isoform 4 of RORA (via AF-2 motif). Interacts with STUB1, HSPA8 and HSPA1A/B. Interacts with PPP1CA, PPP1CB and PPP1CG. Interacts with KAT5 and HDAC7. Interacts with HDAC9 in the absence of T-cell stimulation. Interacts with USP7. Interacts with isoform 2 of ZFP90 and can form a complex with TRIM28 in the presence of isoform 2 of ZFP90. Interacts with RUNX1. Interacts with RORC. Interacts with RELA and NFATC2. Interacts with RUNX2, RUNX3 and IKZF4 (By similarity).</text>
</comment>
<comment type="interaction">
    <interactant intactId="EBI-983719">
        <id>Q9BZS1</id>
    </interactant>
    <interactant intactId="EBI-530054">
        <id>Q15910</id>
        <label>EZH2</label>
    </interactant>
    <organismsDiffer>false</organismsDiffer>
    <experiments>9</experiments>
</comment>
<comment type="interaction">
    <interactant intactId="EBI-983719">
        <id>Q9BZS1</id>
    </interactant>
    <interactant intactId="EBI-2806743">
        <id>P53539</id>
        <label>FOSB</label>
    </interactant>
    <organismsDiffer>false</organismsDiffer>
    <experiments>3</experiments>
</comment>
<comment type="interaction">
    <interactant intactId="EBI-983719">
        <id>Q9BZS1</id>
    </interactant>
    <interactant intactId="EBI-747204">
        <id>Q9UKT9</id>
        <label>IKZF3</label>
    </interactant>
    <organismsDiffer>false</organismsDiffer>
    <experiments>2</experiments>
</comment>
<comment type="interaction">
    <interactant intactId="EBI-983719">
        <id>Q9BZS1</id>
    </interactant>
    <interactant intactId="EBI-3957694">
        <id>Q9BYR6</id>
        <label>KRTAP3-3</label>
    </interactant>
    <organismsDiffer>false</organismsDiffer>
    <experiments>3</experiments>
</comment>
<comment type="interaction">
    <interactant intactId="EBI-983719">
        <id>Q9BZS1</id>
    </interactant>
    <interactant intactId="EBI-11962084">
        <id>Q3LI66</id>
        <label>KRTAP6-2</label>
    </interactant>
    <organismsDiffer>false</organismsDiffer>
    <experiments>3</experiments>
</comment>
<comment type="interaction">
    <interactant intactId="EBI-983719">
        <id>Q9BZS1</id>
    </interactant>
    <interactant intactId="EBI-10261141">
        <id>Q8IUC2</id>
        <label>KRTAP8-1</label>
    </interactant>
    <organismsDiffer>false</organismsDiffer>
    <experiments>3</experiments>
</comment>
<comment type="interaction">
    <interactant intactId="EBI-983719">
        <id>Q9BZS1</id>
    </interactant>
    <interactant intactId="EBI-357253">
        <id>P62136</id>
        <label>PPP1CA</label>
    </interactant>
    <organismsDiffer>false</organismsDiffer>
    <experiments>2</experiments>
</comment>
<comment type="interaction">
    <interactant intactId="EBI-983719">
        <id>Q9BZS1</id>
    </interactant>
    <interactant intactId="EBI-10172814">
        <id>P86479</id>
        <label>PRR20C</label>
    </interactant>
    <organismsDiffer>false</organismsDiffer>
    <experiments>4</experiments>
</comment>
<comment type="interaction">
    <interactant intactId="EBI-983719">
        <id>Q9BZS1</id>
    </interactant>
    <interactant intactId="EBI-12754095">
        <id>P86480</id>
        <label>PRR20D</label>
    </interactant>
    <organismsDiffer>false</organismsDiffer>
    <experiments>4</experiments>
</comment>
<comment type="interaction">
    <interactant intactId="EBI-983719">
        <id>Q9BZS1</id>
    </interactant>
    <interactant intactId="EBI-12700196">
        <id>P86478</id>
        <label>PRR20E</label>
    </interactant>
    <organismsDiffer>false</organismsDiffer>
    <experiments>5</experiments>
</comment>
<comment type="interaction">
    <interactant intactId="EBI-983719">
        <id>Q9BZS1</id>
    </interactant>
    <interactant intactId="EBI-740322">
        <id>Q93062</id>
        <label>RBPMS</label>
    </interactant>
    <organismsDiffer>false</organismsDiffer>
    <experiments>6</experiments>
</comment>
<comment type="interaction">
    <interactant intactId="EBI-983719">
        <id>Q9BZS1</id>
    </interactant>
    <interactant intactId="EBI-740343">
        <id>Q93062-3</id>
        <label>RBPMS</label>
    </interactant>
    <organismsDiffer>false</organismsDiffer>
    <experiments>3</experiments>
</comment>
<comment type="interaction">
    <interactant intactId="EBI-983719">
        <id>Q9BZS1</id>
    </interactant>
    <interactant intactId="EBI-11295807">
        <id>P35398-4</id>
        <label>RORA</label>
    </interactant>
    <organismsDiffer>false</organismsDiffer>
    <experiments>5</experiments>
</comment>
<comment type="interaction">
    <interactant intactId="EBI-983719">
        <id>Q9BZS1</id>
    </interactant>
    <interactant intactId="EBI-357085">
        <id>Q9UNE7</id>
        <label>STUB1</label>
    </interactant>
    <organismsDiffer>false</organismsDiffer>
    <experiments>7</experiments>
</comment>
<comment type="interaction">
    <interactant intactId="EBI-983719">
        <id>Q9BZS1</id>
    </interactant>
    <interactant intactId="EBI-2512823">
        <id>Q9H0E7</id>
        <label>USP44</label>
    </interactant>
    <organismsDiffer>false</organismsDiffer>
    <experiments>3</experiments>
</comment>
<comment type="interaction">
    <interactant intactId="EBI-983719">
        <id>Q9BZS1</id>
    </interactant>
    <interactant intactId="EBI-11419904">
        <id>Q8TF47-3</id>
        <label>ZFP90</label>
    </interactant>
    <organismsDiffer>false</organismsDiffer>
    <experiments>4</experiments>
</comment>
<comment type="interaction">
    <interactant intactId="EBI-983719">
        <id>Q9BZS1</id>
    </interactant>
    <interactant intactId="EBI-25492388">
        <id>PRO_0000449621</id>
        <label>rep</label>
        <dbReference type="UniProtKB" id="P0DTD1"/>
    </interactant>
    <organismsDiffer>true</organismsDiffer>
    <experiments>4</experiments>
</comment>
<comment type="interaction">
    <interactant intactId="EBI-9695448">
        <id>Q9BZS1-1</id>
    </interactant>
    <interactant intactId="EBI-1048378">
        <id>Q8WUI4</id>
        <label>HDAC7</label>
    </interactant>
    <organismsDiffer>false</organismsDiffer>
    <experiments>2</experiments>
</comment>
<comment type="interaction">
    <interactant intactId="EBI-9695448">
        <id>Q9BZS1-1</id>
    </interactant>
    <interactant intactId="EBI-399080">
        <id>Q92993</id>
        <label>KAT5</label>
    </interactant>
    <organismsDiffer>false</organismsDiffer>
    <experiments>2</experiments>
</comment>
<comment type="interaction">
    <interactant intactId="EBI-9695448">
        <id>Q9BZS1-1</id>
    </interactant>
    <interactant intactId="EBI-1018629">
        <id>P11309-1</id>
        <label>PIM1</label>
    </interactant>
    <organismsDiffer>false</organismsDiffer>
    <experiments>3</experiments>
</comment>
<comment type="interaction">
    <interactant intactId="EBI-16338471">
        <id>Q9BZS1-2</id>
    </interactant>
    <interactant intactId="EBI-1048378">
        <id>Q8WUI4</id>
        <label>HDAC7</label>
    </interactant>
    <organismsDiffer>false</organismsDiffer>
    <experiments>2</experiments>
</comment>
<comment type="subcellular location">
    <subcellularLocation>
        <location evidence="2 9 11 18 20 22 23 27">Nucleus</location>
    </subcellularLocation>
    <subcellularLocation>
        <location evidence="18">Cytoplasm</location>
    </subcellularLocation>
    <text evidence="1 18">Predominantly expressed in the cytoplasm in activated conventional T-cells whereas predominantly expressed in the nucleus in regulatory T-cells (Treg). The 41 kDa form derived by proteolytic processing is found exclusively in the chromatin fraction of activated Treg cells (By similarity).</text>
</comment>
<comment type="alternative products">
    <event type="alternative splicing"/>
    <isoform>
        <id>Q9BZS1-1</id>
        <name>1</name>
        <sequence type="displayed"/>
    </isoform>
    <isoform>
        <id>Q9BZS1-2</id>
        <name>2</name>
        <sequence type="described" ref="VSP_015796"/>
    </isoform>
    <isoform>
        <id>Q9BZS1-3</id>
        <name>3</name>
        <sequence type="described" ref="VSP_015796 VSP_036418"/>
    </isoform>
    <isoform>
        <id>Q9BZS1-4</id>
        <name>4</name>
        <sequence type="described" ref="VSP_047859"/>
    </isoform>
</comment>
<comment type="induction">
    <text evidence="23 26">Down-regulated in regulatory T-cells (Treg) during inflammation (PubMed:23973223). Up-regulated by FOXO3 (PubMed:30513302).</text>
</comment>
<comment type="domain">
    <text evidence="16">The fork-head DNA-binding domain is essential for its dimerization and interaction with NFATC2.</text>
</comment>
<comment type="PTM">
    <text evidence="22 23 27">Polyubiquitinated, leading to its proteasomal degradation in regulatory T-cells (Treg) which is mediated by STUB1 in a HSPA1A/B-dependent manner. Deubiquitinated by USP7 and USP44; leading to increase in protein stability.</text>
</comment>
<comment type="PTM">
    <text evidence="1 20">Phosphorylation at Ser-418 regulates its transcriptional repressor activity and consequently, regulatory T-cells (Treg) suppressive function. Dephosphorylated at Ser-418 by protein phosphatase 1 (PP1) in Treg cells derived from patients with rheumatoid arthritis. Phosphorylation by CDK2 negatively regulates its transcriptional activity and protein stability (By similarity).</text>
</comment>
<comment type="PTM">
    <text evidence="9 17 24">Acetylation on lysine residues stabilizes FOXP3 and promotes differentiation of T-cells into induced regulatory T-cells (iTregs) associated with suppressive functions (PubMed:17360565, PubMed:24835996). Acetylation is mediated by a coordinated action of KAT5 and EP300/p300 acetyltransferases: EP300/p300 is required to enhance KAT5 autoacetylation, promoting acetylation of FOXP3 by KAT5 (PubMed:24835996). Deacetylated by SIRT1 (PubMed:22312127).</text>
</comment>
<comment type="PTM">
    <text evidence="14">Undergoes proteolytic cleavage in activated regulatory T-cells (Treg), and can be cleaved at either the N- or C-terminal site, or at both sites.</text>
</comment>
<comment type="disease" evidence="4 5 6 7 13 16">
    <disease id="DI-01811">
        <name>Immunodeficiency polyendocrinopathy, enteropathy, X-linked syndrome</name>
        <acronym>IPEX</acronym>
        <description>Characterized by neonatal onset insulin-dependent diabetes mellitus, infections, secretory diarrhea, thrombocytopenia, anemia and eczema. It is usually lethal in infancy.</description>
        <dbReference type="MIM" id="304790"/>
    </disease>
    <text>The disease is caused by variants affecting the gene represented in this entry.</text>
</comment>
<comment type="online information" name="Atlas of Genetics and Cytogenetics in Oncology and Haematology">
    <link uri="https://atlasgeneticsoncology.org/gene/44129/FOXP3"/>
</comment>
<comment type="online information" name="FOXP3base">
    <link uri="https://databases.lovd.nl/shared/genes/FOXP3"/>
    <text>FOXP3 mutation db</text>
</comment>
<comment type="online information" name="Wikipedia">
    <link uri="https://en.wikipedia.org/wiki/FOXP3"/>
    <text>FOXP3 entry</text>
</comment>
<dbReference type="EMBL" id="AF277993">
    <property type="protein sequence ID" value="AAG53607.1"/>
    <property type="molecule type" value="mRNA"/>
</dbReference>
<dbReference type="EMBL" id="EF534714">
    <property type="protein sequence ID" value="ABQ15210.1"/>
    <property type="molecule type" value="mRNA"/>
</dbReference>
<dbReference type="EMBL" id="EU855812">
    <property type="protein sequence ID" value="ACJ46653.1"/>
    <property type="molecule type" value="mRNA"/>
</dbReference>
<dbReference type="EMBL" id="DQ010327">
    <property type="protein sequence ID" value="AAY27088.1"/>
    <property type="molecule type" value="mRNA"/>
</dbReference>
<dbReference type="EMBL" id="AF235097">
    <property type="status" value="NOT_ANNOTATED_CDS"/>
    <property type="molecule type" value="Genomic_DNA"/>
</dbReference>
<dbReference type="EMBL" id="BC113401">
    <property type="protein sequence ID" value="AAI13402.1"/>
    <property type="molecule type" value="mRNA"/>
</dbReference>
<dbReference type="EMBL" id="BC113403">
    <property type="protein sequence ID" value="AAI13404.1"/>
    <property type="molecule type" value="mRNA"/>
</dbReference>
<dbReference type="EMBL" id="BC143785">
    <property type="protein sequence ID" value="AAI43786.1"/>
    <property type="molecule type" value="mRNA"/>
</dbReference>
<dbReference type="EMBL" id="AJ005891">
    <property type="protein sequence ID" value="CAA06748.1"/>
    <property type="molecule type" value="mRNA"/>
</dbReference>
<dbReference type="CCDS" id="CCDS14323.1">
    <molecule id="Q9BZS1-1"/>
</dbReference>
<dbReference type="CCDS" id="CCDS48109.1">
    <molecule id="Q9BZS1-2"/>
</dbReference>
<dbReference type="RefSeq" id="NP_001107849.1">
    <molecule id="Q9BZS1-2"/>
    <property type="nucleotide sequence ID" value="NM_001114377.2"/>
</dbReference>
<dbReference type="RefSeq" id="NP_054728.2">
    <molecule id="Q9BZS1-1"/>
    <property type="nucleotide sequence ID" value="NM_014009.3"/>
</dbReference>
<dbReference type="PDB" id="3QRF">
    <property type="method" value="X-ray"/>
    <property type="resolution" value="2.80 A"/>
    <property type="chains" value="F/G/H/I=336-417"/>
</dbReference>
<dbReference type="PDB" id="4WK8">
    <property type="method" value="X-ray"/>
    <property type="resolution" value="3.40 A"/>
    <property type="chains" value="F/G=336-417"/>
</dbReference>
<dbReference type="PDBsum" id="3QRF"/>
<dbReference type="PDBsum" id="4WK8"/>
<dbReference type="SMR" id="Q9BZS1"/>
<dbReference type="BioGRID" id="119170">
    <property type="interactions" value="86"/>
</dbReference>
<dbReference type="ComplexPortal" id="CPX-8784">
    <property type="entry name" value="FOXP3 transcription factor homodimer"/>
</dbReference>
<dbReference type="CORUM" id="Q9BZS1"/>
<dbReference type="DIP" id="DIP-36584N"/>
<dbReference type="FunCoup" id="Q9BZS1">
    <property type="interactions" value="292"/>
</dbReference>
<dbReference type="IntAct" id="Q9BZS1">
    <property type="interactions" value="78"/>
</dbReference>
<dbReference type="MINT" id="Q9BZS1"/>
<dbReference type="STRING" id="9606.ENSP00000365380"/>
<dbReference type="GlyGen" id="Q9BZS1">
    <property type="glycosylation" value="1 site"/>
</dbReference>
<dbReference type="iPTMnet" id="Q9BZS1"/>
<dbReference type="PhosphoSitePlus" id="Q9BZS1"/>
<dbReference type="SwissPalm" id="Q9BZS1"/>
<dbReference type="BioMuta" id="FOXP3"/>
<dbReference type="DMDM" id="14548061"/>
<dbReference type="jPOST" id="Q9BZS1"/>
<dbReference type="MassIVE" id="Q9BZS1"/>
<dbReference type="PaxDb" id="9606-ENSP00000365380"/>
<dbReference type="PeptideAtlas" id="Q9BZS1"/>
<dbReference type="ProteomicsDB" id="7545"/>
<dbReference type="ProteomicsDB" id="79899">
    <molecule id="Q9BZS1-1"/>
</dbReference>
<dbReference type="ProteomicsDB" id="79900">
    <molecule id="Q9BZS1-2"/>
</dbReference>
<dbReference type="ProteomicsDB" id="79901">
    <molecule id="Q9BZS1-3"/>
</dbReference>
<dbReference type="Pumba" id="Q9BZS1"/>
<dbReference type="TopDownProteomics" id="Q9BZS1-3">
    <molecule id="Q9BZS1-3"/>
</dbReference>
<dbReference type="Antibodypedia" id="485">
    <property type="antibodies" value="2013 antibodies from 53 providers"/>
</dbReference>
<dbReference type="DNASU" id="50943"/>
<dbReference type="Ensembl" id="ENST00000376199.7">
    <molecule id="Q9BZS1-2"/>
    <property type="protein sequence ID" value="ENSP00000365372.2"/>
    <property type="gene ID" value="ENSG00000049768.18"/>
</dbReference>
<dbReference type="Ensembl" id="ENST00000376207.10">
    <molecule id="Q9BZS1-1"/>
    <property type="protein sequence ID" value="ENSP00000365380.4"/>
    <property type="gene ID" value="ENSG00000049768.18"/>
</dbReference>
<dbReference type="Ensembl" id="ENST00000518685.6">
    <molecule id="Q9BZS1-4"/>
    <property type="protein sequence ID" value="ENSP00000428952.2"/>
    <property type="gene ID" value="ENSG00000049768.18"/>
</dbReference>
<dbReference type="Ensembl" id="ENST00000557224.6">
    <molecule id="Q9BZS1-3"/>
    <property type="protein sequence ID" value="ENSP00000451208.1"/>
    <property type="gene ID" value="ENSG00000049768.18"/>
</dbReference>
<dbReference type="GeneID" id="50943"/>
<dbReference type="KEGG" id="hsa:50943"/>
<dbReference type="MANE-Select" id="ENST00000376207.10">
    <property type="protein sequence ID" value="ENSP00000365380.4"/>
    <property type="RefSeq nucleotide sequence ID" value="NM_014009.4"/>
    <property type="RefSeq protein sequence ID" value="NP_054728.2"/>
</dbReference>
<dbReference type="UCSC" id="uc004dne.5">
    <molecule id="Q9BZS1-1"/>
    <property type="organism name" value="human"/>
</dbReference>
<dbReference type="AGR" id="HGNC:6106"/>
<dbReference type="CTD" id="50943"/>
<dbReference type="DisGeNET" id="50943"/>
<dbReference type="GeneCards" id="FOXP3"/>
<dbReference type="GeneReviews" id="FOXP3"/>
<dbReference type="HGNC" id="HGNC:6106">
    <property type="gene designation" value="FOXP3"/>
</dbReference>
<dbReference type="HPA" id="ENSG00000049768">
    <property type="expression patterns" value="Tissue enhanced (epididymis, lymphoid tissue)"/>
</dbReference>
<dbReference type="MalaCards" id="FOXP3"/>
<dbReference type="MIM" id="300292">
    <property type="type" value="gene"/>
</dbReference>
<dbReference type="MIM" id="304790">
    <property type="type" value="phenotype"/>
</dbReference>
<dbReference type="neXtProt" id="NX_Q9BZS1"/>
<dbReference type="OpenTargets" id="ENSG00000049768"/>
<dbReference type="Orphanet" id="37042">
    <property type="disease" value="Immune dysregulation-polyendocrinopathy-enteropathy-X-linked syndrome"/>
</dbReference>
<dbReference type="PharmGKB" id="PA201094"/>
<dbReference type="VEuPathDB" id="HostDB:ENSG00000049768"/>
<dbReference type="eggNOG" id="KOG4385">
    <property type="taxonomic scope" value="Eukaryota"/>
</dbReference>
<dbReference type="GeneTree" id="ENSGT00940000161807"/>
<dbReference type="InParanoid" id="Q9BZS1"/>
<dbReference type="OMA" id="HCQVDHL"/>
<dbReference type="OrthoDB" id="5830876at2759"/>
<dbReference type="PAN-GO" id="Q9BZS1">
    <property type="GO annotations" value="4 GO annotations based on evolutionary models"/>
</dbReference>
<dbReference type="PhylomeDB" id="Q9BZS1"/>
<dbReference type="TreeFam" id="TF326978"/>
<dbReference type="PathwayCommons" id="Q9BZS1"/>
<dbReference type="Reactome" id="R-HSA-8877330">
    <property type="pathway name" value="RUNX1 and FOXP3 control the development of regulatory T lymphocytes (Tregs)"/>
</dbReference>
<dbReference type="Reactome" id="R-HSA-8939256">
    <property type="pathway name" value="RUNX1 regulates transcription of genes involved in WNT signaling"/>
</dbReference>
<dbReference type="SignaLink" id="Q9BZS1"/>
<dbReference type="SIGNOR" id="Q9BZS1"/>
<dbReference type="BioGRID-ORCS" id="50943">
    <property type="hits" value="14 hits in 796 CRISPR screens"/>
</dbReference>
<dbReference type="EvolutionaryTrace" id="Q9BZS1"/>
<dbReference type="GeneWiki" id="FOXP3"/>
<dbReference type="GenomeRNAi" id="50943"/>
<dbReference type="Pharos" id="Q9BZS1">
    <property type="development level" value="Tbio"/>
</dbReference>
<dbReference type="PRO" id="PR:Q9BZS1"/>
<dbReference type="Proteomes" id="UP000005640">
    <property type="component" value="Chromosome X"/>
</dbReference>
<dbReference type="RNAct" id="Q9BZS1">
    <property type="molecule type" value="protein"/>
</dbReference>
<dbReference type="Bgee" id="ENSG00000049768">
    <property type="expression patterns" value="Expressed in primordial germ cell in gonad and 136 other cell types or tissues"/>
</dbReference>
<dbReference type="ExpressionAtlas" id="Q9BZS1">
    <property type="expression patterns" value="baseline and differential"/>
</dbReference>
<dbReference type="GO" id="GO:0000785">
    <property type="term" value="C:chromatin"/>
    <property type="evidence" value="ECO:0000247"/>
    <property type="project" value="NTNU_SB"/>
</dbReference>
<dbReference type="GO" id="GO:0005737">
    <property type="term" value="C:cytoplasm"/>
    <property type="evidence" value="ECO:0000314"/>
    <property type="project" value="UniProtKB"/>
</dbReference>
<dbReference type="GO" id="GO:0005829">
    <property type="term" value="C:cytosol"/>
    <property type="evidence" value="ECO:0000314"/>
    <property type="project" value="HPA"/>
</dbReference>
<dbReference type="GO" id="GO:0005654">
    <property type="term" value="C:nucleoplasm"/>
    <property type="evidence" value="ECO:0000314"/>
    <property type="project" value="HPA"/>
</dbReference>
<dbReference type="GO" id="GO:0005634">
    <property type="term" value="C:nucleus"/>
    <property type="evidence" value="ECO:0000314"/>
    <property type="project" value="UniProtKB"/>
</dbReference>
<dbReference type="GO" id="GO:0032991">
    <property type="term" value="C:protein-containing complex"/>
    <property type="evidence" value="ECO:0000303"/>
    <property type="project" value="UniProtKB"/>
</dbReference>
<dbReference type="GO" id="GO:0003677">
    <property type="term" value="F:DNA binding"/>
    <property type="evidence" value="ECO:0000315"/>
    <property type="project" value="UniProtKB"/>
</dbReference>
<dbReference type="GO" id="GO:0001228">
    <property type="term" value="F:DNA-binding transcription activator activity, RNA polymerase II-specific"/>
    <property type="evidence" value="ECO:0000314"/>
    <property type="project" value="BHF-UCL"/>
</dbReference>
<dbReference type="GO" id="GO:0003700">
    <property type="term" value="F:DNA-binding transcription factor activity"/>
    <property type="evidence" value="ECO:0000314"/>
    <property type="project" value="UniProtKB"/>
</dbReference>
<dbReference type="GO" id="GO:0000981">
    <property type="term" value="F:DNA-binding transcription factor activity, RNA polymerase II-specific"/>
    <property type="evidence" value="ECO:0000247"/>
    <property type="project" value="NTNU_SB"/>
</dbReference>
<dbReference type="GO" id="GO:0001227">
    <property type="term" value="F:DNA-binding transcription repressor activity, RNA polymerase II-specific"/>
    <property type="evidence" value="ECO:0000318"/>
    <property type="project" value="GO_Central"/>
</dbReference>
<dbReference type="GO" id="GO:0035035">
    <property type="term" value="F:histone acetyltransferase binding"/>
    <property type="evidence" value="ECO:0000353"/>
    <property type="project" value="BHF-UCL"/>
</dbReference>
<dbReference type="GO" id="GO:0042826">
    <property type="term" value="F:histone deacetylase binding"/>
    <property type="evidence" value="ECO:0000353"/>
    <property type="project" value="BHF-UCL"/>
</dbReference>
<dbReference type="GO" id="GO:0051059">
    <property type="term" value="F:NF-kappaB binding"/>
    <property type="evidence" value="ECO:0000303"/>
    <property type="project" value="UniProtKB"/>
</dbReference>
<dbReference type="GO" id="GO:0051525">
    <property type="term" value="F:NFAT protein binding"/>
    <property type="evidence" value="ECO:0000353"/>
    <property type="project" value="UniProtKB"/>
</dbReference>
<dbReference type="GO" id="GO:0042803">
    <property type="term" value="F:protein homodimerization activity"/>
    <property type="evidence" value="ECO:0000314"/>
    <property type="project" value="UniProtKB"/>
</dbReference>
<dbReference type="GO" id="GO:0000978">
    <property type="term" value="F:RNA polymerase II cis-regulatory region sequence-specific DNA binding"/>
    <property type="evidence" value="ECO:0000250"/>
    <property type="project" value="UniProtKB"/>
</dbReference>
<dbReference type="GO" id="GO:0043565">
    <property type="term" value="F:sequence-specific DNA binding"/>
    <property type="evidence" value="ECO:0000314"/>
    <property type="project" value="UniProtKB"/>
</dbReference>
<dbReference type="GO" id="GO:1990837">
    <property type="term" value="F:sequence-specific double-stranded DNA binding"/>
    <property type="evidence" value="ECO:0000314"/>
    <property type="project" value="ARUK-UCL"/>
</dbReference>
<dbReference type="GO" id="GO:0003714">
    <property type="term" value="F:transcription corepressor activity"/>
    <property type="evidence" value="ECO:0007669"/>
    <property type="project" value="Ensembl"/>
</dbReference>
<dbReference type="GO" id="GO:0008270">
    <property type="term" value="F:zinc ion binding"/>
    <property type="evidence" value="ECO:0007669"/>
    <property type="project" value="UniProtKB-KW"/>
</dbReference>
<dbReference type="GO" id="GO:0001782">
    <property type="term" value="P:B cell homeostasis"/>
    <property type="evidence" value="ECO:0007669"/>
    <property type="project" value="Ensembl"/>
</dbReference>
<dbReference type="GO" id="GO:0035739">
    <property type="term" value="P:CD4-positive, alpha-beta T cell proliferation"/>
    <property type="evidence" value="ECO:0007669"/>
    <property type="project" value="Ensembl"/>
</dbReference>
<dbReference type="GO" id="GO:0002362">
    <property type="term" value="P:CD4-positive, CD25-positive, alpha-beta regulatory T cell lineage commitment"/>
    <property type="evidence" value="ECO:0000304"/>
    <property type="project" value="UniProtKB"/>
</dbReference>
<dbReference type="GO" id="GO:0006338">
    <property type="term" value="P:chromatin remodeling"/>
    <property type="evidence" value="ECO:0000303"/>
    <property type="project" value="UniProtKB"/>
</dbReference>
<dbReference type="GO" id="GO:0014045">
    <property type="term" value="P:establishment of endothelial blood-brain barrier"/>
    <property type="evidence" value="ECO:0007669"/>
    <property type="project" value="Ensembl"/>
</dbReference>
<dbReference type="GO" id="GO:0033080">
    <property type="term" value="P:immature T cell proliferation in thymus"/>
    <property type="evidence" value="ECO:0007669"/>
    <property type="project" value="Ensembl"/>
</dbReference>
<dbReference type="GO" id="GO:0006954">
    <property type="term" value="P:inflammatory response"/>
    <property type="evidence" value="ECO:0007669"/>
    <property type="project" value="Ensembl"/>
</dbReference>
<dbReference type="GO" id="GO:0048289">
    <property type="term" value="P:isotype switching to IgE isotypes"/>
    <property type="evidence" value="ECO:0007669"/>
    <property type="project" value="Ensembl"/>
</dbReference>
<dbReference type="GO" id="GO:0002262">
    <property type="term" value="P:myeloid cell homeostasis"/>
    <property type="evidence" value="ECO:0007669"/>
    <property type="project" value="Ensembl"/>
</dbReference>
<dbReference type="GO" id="GO:0046007">
    <property type="term" value="P:negative regulation of activated T cell proliferation"/>
    <property type="evidence" value="ECO:0000303"/>
    <property type="project" value="UniProtKB"/>
</dbReference>
<dbReference type="GO" id="GO:2000562">
    <property type="term" value="P:negative regulation of CD4-positive, alpha-beta T cell proliferation"/>
    <property type="evidence" value="ECO:0007669"/>
    <property type="project" value="Ensembl"/>
</dbReference>
<dbReference type="GO" id="GO:0008285">
    <property type="term" value="P:negative regulation of cell population proliferation"/>
    <property type="evidence" value="ECO:0000314"/>
    <property type="project" value="UniProtKB"/>
</dbReference>
<dbReference type="GO" id="GO:0002677">
    <property type="term" value="P:negative regulation of chronic inflammatory response"/>
    <property type="evidence" value="ECO:0007669"/>
    <property type="project" value="Ensembl"/>
</dbReference>
<dbReference type="GO" id="GO:0032792">
    <property type="term" value="P:negative regulation of CREB transcription factor activity"/>
    <property type="evidence" value="ECO:0000314"/>
    <property type="project" value="UniProtKB"/>
</dbReference>
<dbReference type="GO" id="GO:0001818">
    <property type="term" value="P:negative regulation of cytokine production"/>
    <property type="evidence" value="ECO:0000314"/>
    <property type="project" value="UniProtKB"/>
</dbReference>
<dbReference type="GO" id="GO:0050687">
    <property type="term" value="P:negative regulation of defense response to virus"/>
    <property type="evidence" value="ECO:0007669"/>
    <property type="project" value="Ensembl"/>
</dbReference>
<dbReference type="GO" id="GO:0043433">
    <property type="term" value="P:negative regulation of DNA-binding transcription factor activity"/>
    <property type="evidence" value="ECO:0000314"/>
    <property type="project" value="UniProtKB"/>
</dbReference>
<dbReference type="GO" id="GO:0045892">
    <property type="term" value="P:negative regulation of DNA-templated transcription"/>
    <property type="evidence" value="ECO:0000314"/>
    <property type="project" value="UniProtKB"/>
</dbReference>
<dbReference type="GO" id="GO:0050777">
    <property type="term" value="P:negative regulation of immune response"/>
    <property type="evidence" value="ECO:0000314"/>
    <property type="project" value="UniProtKB"/>
</dbReference>
<dbReference type="GO" id="GO:0032693">
    <property type="term" value="P:negative regulation of interleukin-10 production"/>
    <property type="evidence" value="ECO:0000314"/>
    <property type="project" value="UniProtKB"/>
</dbReference>
<dbReference type="GO" id="GO:0032700">
    <property type="term" value="P:negative regulation of interleukin-17 production"/>
    <property type="evidence" value="ECO:0000315"/>
    <property type="project" value="UniProtKB"/>
</dbReference>
<dbReference type="GO" id="GO:0032703">
    <property type="term" value="P:negative regulation of interleukin-2 production"/>
    <property type="evidence" value="ECO:0000314"/>
    <property type="project" value="UniProtKB"/>
</dbReference>
<dbReference type="GO" id="GO:0032713">
    <property type="term" value="P:negative regulation of interleukin-4 production"/>
    <property type="evidence" value="ECO:0000314"/>
    <property type="project" value="UniProtKB"/>
</dbReference>
<dbReference type="GO" id="GO:0032714">
    <property type="term" value="P:negative regulation of interleukin-5 production"/>
    <property type="evidence" value="ECO:0007669"/>
    <property type="project" value="Ensembl"/>
</dbReference>
<dbReference type="GO" id="GO:0032715">
    <property type="term" value="P:negative regulation of interleukin-6 production"/>
    <property type="evidence" value="ECO:0007669"/>
    <property type="project" value="Ensembl"/>
</dbReference>
<dbReference type="GO" id="GO:0048294">
    <property type="term" value="P:negative regulation of isotype switching to IgE isotypes"/>
    <property type="evidence" value="ECO:0007669"/>
    <property type="project" value="Ensembl"/>
</dbReference>
<dbReference type="GO" id="GO:0032088">
    <property type="term" value="P:negative regulation of NF-kappaB transcription factor activity"/>
    <property type="evidence" value="ECO:0000314"/>
    <property type="project" value="UniProtKB"/>
</dbReference>
<dbReference type="GO" id="GO:0002725">
    <property type="term" value="P:negative regulation of T cell cytokine production"/>
    <property type="evidence" value="ECO:0000314"/>
    <property type="project" value="UniProtKB"/>
</dbReference>
<dbReference type="GO" id="GO:0042130">
    <property type="term" value="P:negative regulation of T cell proliferation"/>
    <property type="evidence" value="ECO:0000314"/>
    <property type="project" value="UniProtKB"/>
</dbReference>
<dbReference type="GO" id="GO:2000320">
    <property type="term" value="P:negative regulation of T-helper 17 cell differentiation"/>
    <property type="evidence" value="ECO:0000315"/>
    <property type="project" value="UniProtKB"/>
</dbReference>
<dbReference type="GO" id="GO:0032720">
    <property type="term" value="P:negative regulation of tumor necrosis factor production"/>
    <property type="evidence" value="ECO:0007669"/>
    <property type="project" value="Ensembl"/>
</dbReference>
<dbReference type="GO" id="GO:0032689">
    <property type="term" value="P:negative regulation of type II interferon production"/>
    <property type="evidence" value="ECO:0000314"/>
    <property type="project" value="UniProtKB"/>
</dbReference>
<dbReference type="GO" id="GO:0032831">
    <property type="term" value="P:positive regulation of CD4-positive, CD25-positive, alpha-beta regulatory T cell differentiation"/>
    <property type="evidence" value="ECO:0000304"/>
    <property type="project" value="UniProtKB"/>
</dbReference>
<dbReference type="GO" id="GO:0045893">
    <property type="term" value="P:positive regulation of DNA-templated transcription"/>
    <property type="evidence" value="ECO:0000314"/>
    <property type="project" value="UniProtKB"/>
</dbReference>
<dbReference type="GO" id="GO:0033092">
    <property type="term" value="P:positive regulation of immature T cell proliferation in thymus"/>
    <property type="evidence" value="ECO:0007669"/>
    <property type="project" value="Ensembl"/>
</dbReference>
<dbReference type="GO" id="GO:0032753">
    <property type="term" value="P:positive regulation of interleukin-4 production"/>
    <property type="evidence" value="ECO:0007669"/>
    <property type="project" value="Ensembl"/>
</dbReference>
<dbReference type="GO" id="GO:0002851">
    <property type="term" value="P:positive regulation of peripheral T cell tolerance induction"/>
    <property type="evidence" value="ECO:0007669"/>
    <property type="project" value="Ensembl"/>
</dbReference>
<dbReference type="GO" id="GO:0045591">
    <property type="term" value="P:positive regulation of regulatory T cell differentiation"/>
    <property type="evidence" value="ECO:0000314"/>
    <property type="project" value="UniProtKB"/>
</dbReference>
<dbReference type="GO" id="GO:0002669">
    <property type="term" value="P:positive regulation of T cell anergy"/>
    <property type="evidence" value="ECO:0007669"/>
    <property type="project" value="Ensembl"/>
</dbReference>
<dbReference type="GO" id="GO:0045944">
    <property type="term" value="P:positive regulation of transcription by RNA polymerase II"/>
    <property type="evidence" value="ECO:0000315"/>
    <property type="project" value="BHF-UCL"/>
</dbReference>
<dbReference type="GO" id="GO:0032914">
    <property type="term" value="P:positive regulation of transforming growth factor beta1 production"/>
    <property type="evidence" value="ECO:0007669"/>
    <property type="project" value="Ensembl"/>
</dbReference>
<dbReference type="GO" id="GO:0006355">
    <property type="term" value="P:regulation of DNA-templated transcription"/>
    <property type="evidence" value="ECO:0000303"/>
    <property type="project" value="UniProtKB"/>
</dbReference>
<dbReference type="GO" id="GO:0048302">
    <property type="term" value="P:regulation of isotype switching to IgG isotypes"/>
    <property type="evidence" value="ECO:0007669"/>
    <property type="project" value="Ensembl"/>
</dbReference>
<dbReference type="GO" id="GO:0002667">
    <property type="term" value="P:regulation of T cell anergy"/>
    <property type="evidence" value="ECO:0000250"/>
    <property type="project" value="UniProtKB"/>
</dbReference>
<dbReference type="GO" id="GO:0006357">
    <property type="term" value="P:regulation of transcription by RNA polymerase II"/>
    <property type="evidence" value="ECO:0000318"/>
    <property type="project" value="GO_Central"/>
</dbReference>
<dbReference type="GO" id="GO:0045066">
    <property type="term" value="P:regulatory T cell differentiation"/>
    <property type="evidence" value="ECO:0000314"/>
    <property type="project" value="UniProt"/>
</dbReference>
<dbReference type="GO" id="GO:0032496">
    <property type="term" value="P:response to lipopolysaccharide"/>
    <property type="evidence" value="ECO:0007669"/>
    <property type="project" value="Ensembl"/>
</dbReference>
<dbReference type="GO" id="GO:1901355">
    <property type="term" value="P:response to rapamycin"/>
    <property type="evidence" value="ECO:0007669"/>
    <property type="project" value="Ensembl"/>
</dbReference>
<dbReference type="GO" id="GO:0009615">
    <property type="term" value="P:response to virus"/>
    <property type="evidence" value="ECO:0000270"/>
    <property type="project" value="UniProtKB"/>
</dbReference>
<dbReference type="GO" id="GO:0042110">
    <property type="term" value="P:T cell activation"/>
    <property type="evidence" value="ECO:0000314"/>
    <property type="project" value="UniProtKB"/>
</dbReference>
<dbReference type="GO" id="GO:0002870">
    <property type="term" value="P:T cell anergy"/>
    <property type="evidence" value="ECO:0007669"/>
    <property type="project" value="Ensembl"/>
</dbReference>
<dbReference type="GO" id="GO:0043029">
    <property type="term" value="P:T cell homeostasis"/>
    <property type="evidence" value="ECO:0000303"/>
    <property type="project" value="UniProtKB"/>
</dbReference>
<dbReference type="GO" id="GO:0002456">
    <property type="term" value="P:T cell mediated immunity"/>
    <property type="evidence" value="ECO:0007669"/>
    <property type="project" value="Ensembl"/>
</dbReference>
<dbReference type="GO" id="GO:0050852">
    <property type="term" value="P:T cell receptor signaling pathway"/>
    <property type="evidence" value="ECO:0007669"/>
    <property type="project" value="Ensembl"/>
</dbReference>
<dbReference type="GO" id="GO:0002513">
    <property type="term" value="P:tolerance induction to self antigen"/>
    <property type="evidence" value="ECO:0007669"/>
    <property type="project" value="Ensembl"/>
</dbReference>
<dbReference type="GO" id="GO:0006366">
    <property type="term" value="P:transcription by RNA polymerase II"/>
    <property type="evidence" value="ECO:0007669"/>
    <property type="project" value="Ensembl"/>
</dbReference>
<dbReference type="GO" id="GO:0032905">
    <property type="term" value="P:transforming growth factor beta1 production"/>
    <property type="evidence" value="ECO:0007669"/>
    <property type="project" value="Ensembl"/>
</dbReference>
<dbReference type="CDD" id="cd20066">
    <property type="entry name" value="FH_FOXP3"/>
    <property type="match status" value="1"/>
</dbReference>
<dbReference type="FunFam" id="1.10.10.10:FF:000010">
    <property type="entry name" value="Forkhead box P2 isoform B"/>
    <property type="match status" value="1"/>
</dbReference>
<dbReference type="FunFam" id="1.20.5.340:FF:000024">
    <property type="entry name" value="Forkhead box P3, isoform CRA_b"/>
    <property type="match status" value="1"/>
</dbReference>
<dbReference type="Gene3D" id="1.20.5.340">
    <property type="match status" value="1"/>
</dbReference>
<dbReference type="Gene3D" id="1.10.10.10">
    <property type="entry name" value="Winged helix-like DNA-binding domain superfamily/Winged helix DNA-binding domain"/>
    <property type="match status" value="1"/>
</dbReference>
<dbReference type="IDEAL" id="IID00497"/>
<dbReference type="InterPro" id="IPR047413">
    <property type="entry name" value="FH_FOXP3"/>
</dbReference>
<dbReference type="InterPro" id="IPR001766">
    <property type="entry name" value="Fork_head_dom"/>
</dbReference>
<dbReference type="InterPro" id="IPR050998">
    <property type="entry name" value="FOXP"/>
</dbReference>
<dbReference type="InterPro" id="IPR032354">
    <property type="entry name" value="FOXP-CC"/>
</dbReference>
<dbReference type="InterPro" id="IPR030456">
    <property type="entry name" value="TF_fork_head_CS_2"/>
</dbReference>
<dbReference type="InterPro" id="IPR036388">
    <property type="entry name" value="WH-like_DNA-bd_sf"/>
</dbReference>
<dbReference type="InterPro" id="IPR036390">
    <property type="entry name" value="WH_DNA-bd_sf"/>
</dbReference>
<dbReference type="InterPro" id="IPR013087">
    <property type="entry name" value="Znf_C2H2_type"/>
</dbReference>
<dbReference type="PANTHER" id="PTHR45796">
    <property type="entry name" value="FORKHEAD BOX P, ISOFORM C"/>
    <property type="match status" value="1"/>
</dbReference>
<dbReference type="PANTHER" id="PTHR45796:SF5">
    <property type="entry name" value="FORKHEAD BOX PROTEIN P3"/>
    <property type="match status" value="1"/>
</dbReference>
<dbReference type="Pfam" id="PF00250">
    <property type="entry name" value="Forkhead"/>
    <property type="match status" value="1"/>
</dbReference>
<dbReference type="Pfam" id="PF16159">
    <property type="entry name" value="FOXP-CC"/>
    <property type="match status" value="1"/>
</dbReference>
<dbReference type="PRINTS" id="PR00053">
    <property type="entry name" value="FORKHEAD"/>
</dbReference>
<dbReference type="SMART" id="SM00339">
    <property type="entry name" value="FH"/>
    <property type="match status" value="1"/>
</dbReference>
<dbReference type="SUPFAM" id="SSF46785">
    <property type="entry name" value="Winged helix' DNA-binding domain"/>
    <property type="match status" value="1"/>
</dbReference>
<dbReference type="PROSITE" id="PS00658">
    <property type="entry name" value="FORK_HEAD_2"/>
    <property type="match status" value="1"/>
</dbReference>
<dbReference type="PROSITE" id="PS50039">
    <property type="entry name" value="FORK_HEAD_3"/>
    <property type="match status" value="1"/>
</dbReference>
<dbReference type="PROSITE" id="PS00028">
    <property type="entry name" value="ZINC_FINGER_C2H2_1"/>
    <property type="match status" value="1"/>
</dbReference>
<organism>
    <name type="scientific">Homo sapiens</name>
    <name type="common">Human</name>
    <dbReference type="NCBI Taxonomy" id="9606"/>
    <lineage>
        <taxon>Eukaryota</taxon>
        <taxon>Metazoa</taxon>
        <taxon>Chordata</taxon>
        <taxon>Craniata</taxon>
        <taxon>Vertebrata</taxon>
        <taxon>Euteleostomi</taxon>
        <taxon>Mammalia</taxon>
        <taxon>Eutheria</taxon>
        <taxon>Euarchontoglires</taxon>
        <taxon>Primates</taxon>
        <taxon>Haplorrhini</taxon>
        <taxon>Catarrhini</taxon>
        <taxon>Hominidae</taxon>
        <taxon>Homo</taxon>
    </lineage>
</organism>
<keyword id="KW-0002">3D-structure</keyword>
<keyword id="KW-0007">Acetylation</keyword>
<keyword id="KW-0010">Activator</keyword>
<keyword id="KW-0025">Alternative splicing</keyword>
<keyword id="KW-0963">Cytoplasm</keyword>
<keyword id="KW-0219">Diabetes mellitus</keyword>
<keyword id="KW-0225">Disease variant</keyword>
<keyword id="KW-0238">DNA-binding</keyword>
<keyword id="KW-1017">Isopeptide bond</keyword>
<keyword id="KW-0479">Metal-binding</keyword>
<keyword id="KW-0539">Nucleus</keyword>
<keyword id="KW-0597">Phosphoprotein</keyword>
<keyword id="KW-1267">Proteomics identification</keyword>
<keyword id="KW-1185">Reference proteome</keyword>
<keyword id="KW-0678">Repressor</keyword>
<keyword id="KW-0804">Transcription</keyword>
<keyword id="KW-0805">Transcription regulation</keyword>
<keyword id="KW-0832">Ubl conjugation</keyword>
<keyword id="KW-0862">Zinc</keyword>
<keyword id="KW-0863">Zinc-finger</keyword>
<proteinExistence type="evidence at protein level"/>
<name>FOXP3_HUMAN</name>
<accession>Q9BZS1</accession>
<accession>A5HJT1</accession>
<accession>B7ZLG0</accession>
<accession>B9UN80</accession>
<accession>O60827</accession>
<accession>Q14DD8</accession>
<accession>Q4ZH51</accession>
<protein>
    <recommendedName>
        <fullName>Forkhead box protein P3</fullName>
    </recommendedName>
    <alternativeName>
        <fullName>Scurfin</fullName>
    </alternativeName>
    <component>
        <recommendedName>
            <fullName>Forkhead box protein P3, C-terminally processed</fullName>
        </recommendedName>
    </component>
    <component>
        <recommendedName>
            <fullName>Forkhead box protein P3 41 kDa form</fullName>
        </recommendedName>
    </component>
</protein>
<sequence length="431" mass="47244">MPNPRPGKPSAPSLALGPSPGASPSWRAAPKASDLLGARGPGGTFQGRDLRGGAHASSSSLNPMPPSQLQLPTLPLVMVAPSGARLGPLPHLQALLQDRPHFMHQLSTVDAHARTPVLQVHPLESPAMISLTPPTTATGVFSLKARPGLPPGINVASLEWVSREPALLCTFPNPSAPRKDSTLSAVPQSSYPLLANGVCKWPGCEKVFEEPEDFLKHCQADHLLDEKGRAQCLLQREMVQSLEQQLVLEKEKLSAMQAHLAGKMALTKASSVASSDKGSCCIVAAGSQGPVVPAWSGPREAPDSLFAVRRHLWGSHGNSTFPEFLHNMDYFKFHNMRPPFTYATLIRWAILEAPEKQRTLNEIYHWFTRMFAFFRNHPATWKNAIRHNLSLHKCFVRVESEKGAVWTVDELEFRKKRSQRPSRCSNPTPGP</sequence>
<reference key="1">
    <citation type="journal article" date="2001" name="Nat. Genet.">
        <title>Disruption of a new forkhead/winged-helix protein, scurfin, results in the fatal lymphoproliferative disorder of the scurfy mouse.</title>
        <authorList>
            <person name="Brunkow M.E."/>
            <person name="Jeffery E.W."/>
            <person name="Hjerrild K.A."/>
            <person name="Paeper B."/>
            <person name="Clark L.B."/>
            <person name="Yasayko S.-A."/>
            <person name="Wilkinson J.E."/>
            <person name="Galas D."/>
            <person name="Ziegler S.F."/>
            <person name="Ramsdell F."/>
        </authorList>
    </citation>
    <scope>NUCLEOTIDE SEQUENCE [MRNA] (ISOFORM 1)</scope>
</reference>
<reference key="2">
    <citation type="submission" date="2007-04" db="EMBL/GenBank/DDBJ databases">
        <title>Cloning and expression of the cDNA for FOXP3.</title>
        <authorList>
            <person name="Wang J."/>
            <person name="Liu Q."/>
            <person name="Zhang Y."/>
            <person name="Xu Z."/>
            <person name="Huang C."/>
        </authorList>
    </citation>
    <scope>NUCLEOTIDE SEQUENCE [MRNA] (ISOFORM 1)</scope>
</reference>
<reference key="3">
    <citation type="submission" date="2008-06" db="EMBL/GenBank/DDBJ databases">
        <title>Functional characterization of FOXP3 splice variants in human regulatory T cells.</title>
        <authorList>
            <person name="Kaur G."/>
            <person name="Goodall J.C."/>
            <person name="Jarvis L.B."/>
            <person name="Gaston J.S.H."/>
        </authorList>
    </citation>
    <scope>NUCLEOTIDE SEQUENCE [MRNA] (ISOFORM 4)</scope>
</reference>
<reference key="4">
    <citation type="submission" date="2005-04" db="EMBL/GenBank/DDBJ databases">
        <authorList>
            <person name="Lin L."/>
            <person name="Nong W."/>
            <person name="Li H."/>
            <person name="Ke R."/>
            <person name="Shen C."/>
            <person name="Zhong G."/>
            <person name="Zheng Z."/>
            <person name="Liang M."/>
            <person name="Huang B."/>
            <person name="Zhou G."/>
            <person name="Yang S."/>
        </authorList>
    </citation>
    <scope>NUCLEOTIDE SEQUENCE [LARGE SCALE MRNA] (ISOFORM 2)</scope>
</reference>
<reference key="5">
    <citation type="journal article" date="2005" name="Nature">
        <title>The DNA sequence of the human X chromosome.</title>
        <authorList>
            <person name="Ross M.T."/>
            <person name="Grafham D.V."/>
            <person name="Coffey A.J."/>
            <person name="Scherer S."/>
            <person name="McLay K."/>
            <person name="Muzny D."/>
            <person name="Platzer M."/>
            <person name="Howell G.R."/>
            <person name="Burrows C."/>
            <person name="Bird C.P."/>
            <person name="Frankish A."/>
            <person name="Lovell F.L."/>
            <person name="Howe K.L."/>
            <person name="Ashurst J.L."/>
            <person name="Fulton R.S."/>
            <person name="Sudbrak R."/>
            <person name="Wen G."/>
            <person name="Jones M.C."/>
            <person name="Hurles M.E."/>
            <person name="Andrews T.D."/>
            <person name="Scott C.E."/>
            <person name="Searle S."/>
            <person name="Ramser J."/>
            <person name="Whittaker A."/>
            <person name="Deadman R."/>
            <person name="Carter N.P."/>
            <person name="Hunt S.E."/>
            <person name="Chen R."/>
            <person name="Cree A."/>
            <person name="Gunaratne P."/>
            <person name="Havlak P."/>
            <person name="Hodgson A."/>
            <person name="Metzker M.L."/>
            <person name="Richards S."/>
            <person name="Scott G."/>
            <person name="Steffen D."/>
            <person name="Sodergren E."/>
            <person name="Wheeler D.A."/>
            <person name="Worley K.C."/>
            <person name="Ainscough R."/>
            <person name="Ambrose K.D."/>
            <person name="Ansari-Lari M.A."/>
            <person name="Aradhya S."/>
            <person name="Ashwell R.I."/>
            <person name="Babbage A.K."/>
            <person name="Bagguley C.L."/>
            <person name="Ballabio A."/>
            <person name="Banerjee R."/>
            <person name="Barker G.E."/>
            <person name="Barlow K.F."/>
            <person name="Barrett I.P."/>
            <person name="Bates K.N."/>
            <person name="Beare D.M."/>
            <person name="Beasley H."/>
            <person name="Beasley O."/>
            <person name="Beck A."/>
            <person name="Bethel G."/>
            <person name="Blechschmidt K."/>
            <person name="Brady N."/>
            <person name="Bray-Allen S."/>
            <person name="Bridgeman A.M."/>
            <person name="Brown A.J."/>
            <person name="Brown M.J."/>
            <person name="Bonnin D."/>
            <person name="Bruford E.A."/>
            <person name="Buhay C."/>
            <person name="Burch P."/>
            <person name="Burford D."/>
            <person name="Burgess J."/>
            <person name="Burrill W."/>
            <person name="Burton J."/>
            <person name="Bye J.M."/>
            <person name="Carder C."/>
            <person name="Carrel L."/>
            <person name="Chako J."/>
            <person name="Chapman J.C."/>
            <person name="Chavez D."/>
            <person name="Chen E."/>
            <person name="Chen G."/>
            <person name="Chen Y."/>
            <person name="Chen Z."/>
            <person name="Chinault C."/>
            <person name="Ciccodicola A."/>
            <person name="Clark S.Y."/>
            <person name="Clarke G."/>
            <person name="Clee C.M."/>
            <person name="Clegg S."/>
            <person name="Clerc-Blankenburg K."/>
            <person name="Clifford K."/>
            <person name="Cobley V."/>
            <person name="Cole C.G."/>
            <person name="Conquer J.S."/>
            <person name="Corby N."/>
            <person name="Connor R.E."/>
            <person name="David R."/>
            <person name="Davies J."/>
            <person name="Davis C."/>
            <person name="Davis J."/>
            <person name="Delgado O."/>
            <person name="Deshazo D."/>
            <person name="Dhami P."/>
            <person name="Ding Y."/>
            <person name="Dinh H."/>
            <person name="Dodsworth S."/>
            <person name="Draper H."/>
            <person name="Dugan-Rocha S."/>
            <person name="Dunham A."/>
            <person name="Dunn M."/>
            <person name="Durbin K.J."/>
            <person name="Dutta I."/>
            <person name="Eades T."/>
            <person name="Ellwood M."/>
            <person name="Emery-Cohen A."/>
            <person name="Errington H."/>
            <person name="Evans K.L."/>
            <person name="Faulkner L."/>
            <person name="Francis F."/>
            <person name="Frankland J."/>
            <person name="Fraser A.E."/>
            <person name="Galgoczy P."/>
            <person name="Gilbert J."/>
            <person name="Gill R."/>
            <person name="Gloeckner G."/>
            <person name="Gregory S.G."/>
            <person name="Gribble S."/>
            <person name="Griffiths C."/>
            <person name="Grocock R."/>
            <person name="Gu Y."/>
            <person name="Gwilliam R."/>
            <person name="Hamilton C."/>
            <person name="Hart E.A."/>
            <person name="Hawes A."/>
            <person name="Heath P.D."/>
            <person name="Heitmann K."/>
            <person name="Hennig S."/>
            <person name="Hernandez J."/>
            <person name="Hinzmann B."/>
            <person name="Ho S."/>
            <person name="Hoffs M."/>
            <person name="Howden P.J."/>
            <person name="Huckle E.J."/>
            <person name="Hume J."/>
            <person name="Hunt P.J."/>
            <person name="Hunt A.R."/>
            <person name="Isherwood J."/>
            <person name="Jacob L."/>
            <person name="Johnson D."/>
            <person name="Jones S."/>
            <person name="de Jong P.J."/>
            <person name="Joseph S.S."/>
            <person name="Keenan S."/>
            <person name="Kelly S."/>
            <person name="Kershaw J.K."/>
            <person name="Khan Z."/>
            <person name="Kioschis P."/>
            <person name="Klages S."/>
            <person name="Knights A.J."/>
            <person name="Kosiura A."/>
            <person name="Kovar-Smith C."/>
            <person name="Laird G.K."/>
            <person name="Langford C."/>
            <person name="Lawlor S."/>
            <person name="Leversha M."/>
            <person name="Lewis L."/>
            <person name="Liu W."/>
            <person name="Lloyd C."/>
            <person name="Lloyd D.M."/>
            <person name="Loulseged H."/>
            <person name="Loveland J.E."/>
            <person name="Lovell J.D."/>
            <person name="Lozado R."/>
            <person name="Lu J."/>
            <person name="Lyne R."/>
            <person name="Ma J."/>
            <person name="Maheshwari M."/>
            <person name="Matthews L.H."/>
            <person name="McDowall J."/>
            <person name="McLaren S."/>
            <person name="McMurray A."/>
            <person name="Meidl P."/>
            <person name="Meitinger T."/>
            <person name="Milne S."/>
            <person name="Miner G."/>
            <person name="Mistry S.L."/>
            <person name="Morgan M."/>
            <person name="Morris S."/>
            <person name="Mueller I."/>
            <person name="Mullikin J.C."/>
            <person name="Nguyen N."/>
            <person name="Nordsiek G."/>
            <person name="Nyakatura G."/>
            <person name="O'dell C.N."/>
            <person name="Okwuonu G."/>
            <person name="Palmer S."/>
            <person name="Pandian R."/>
            <person name="Parker D."/>
            <person name="Parrish J."/>
            <person name="Pasternak S."/>
            <person name="Patel D."/>
            <person name="Pearce A.V."/>
            <person name="Pearson D.M."/>
            <person name="Pelan S.E."/>
            <person name="Perez L."/>
            <person name="Porter K.M."/>
            <person name="Ramsey Y."/>
            <person name="Reichwald K."/>
            <person name="Rhodes S."/>
            <person name="Ridler K.A."/>
            <person name="Schlessinger D."/>
            <person name="Schueler M.G."/>
            <person name="Sehra H.K."/>
            <person name="Shaw-Smith C."/>
            <person name="Shen H."/>
            <person name="Sheridan E.M."/>
            <person name="Shownkeen R."/>
            <person name="Skuce C.D."/>
            <person name="Smith M.L."/>
            <person name="Sotheran E.C."/>
            <person name="Steingruber H.E."/>
            <person name="Steward C.A."/>
            <person name="Storey R."/>
            <person name="Swann R.M."/>
            <person name="Swarbreck D."/>
            <person name="Tabor P.E."/>
            <person name="Taudien S."/>
            <person name="Taylor T."/>
            <person name="Teague B."/>
            <person name="Thomas K."/>
            <person name="Thorpe A."/>
            <person name="Timms K."/>
            <person name="Tracey A."/>
            <person name="Trevanion S."/>
            <person name="Tromans A.C."/>
            <person name="d'Urso M."/>
            <person name="Verduzco D."/>
            <person name="Villasana D."/>
            <person name="Waldron L."/>
            <person name="Wall M."/>
            <person name="Wang Q."/>
            <person name="Warren J."/>
            <person name="Warry G.L."/>
            <person name="Wei X."/>
            <person name="West A."/>
            <person name="Whitehead S.L."/>
            <person name="Whiteley M.N."/>
            <person name="Wilkinson J.E."/>
            <person name="Willey D.L."/>
            <person name="Williams G."/>
            <person name="Williams L."/>
            <person name="Williamson A."/>
            <person name="Williamson H."/>
            <person name="Wilming L."/>
            <person name="Woodmansey R.L."/>
            <person name="Wray P.W."/>
            <person name="Yen J."/>
            <person name="Zhang J."/>
            <person name="Zhou J."/>
            <person name="Zoghbi H."/>
            <person name="Zorilla S."/>
            <person name="Buck D."/>
            <person name="Reinhardt R."/>
            <person name="Poustka A."/>
            <person name="Rosenthal A."/>
            <person name="Lehrach H."/>
            <person name="Meindl A."/>
            <person name="Minx P.J."/>
            <person name="Hillier L.W."/>
            <person name="Willard H.F."/>
            <person name="Wilson R.K."/>
            <person name="Waterston R.H."/>
            <person name="Rice C.M."/>
            <person name="Vaudin M."/>
            <person name="Coulson A."/>
            <person name="Nelson D.L."/>
            <person name="Weinstock G."/>
            <person name="Sulston J.E."/>
            <person name="Durbin R.M."/>
            <person name="Hubbard T."/>
            <person name="Gibbs R.A."/>
            <person name="Beck S."/>
            <person name="Rogers J."/>
            <person name="Bentley D.R."/>
        </authorList>
    </citation>
    <scope>NUCLEOTIDE SEQUENCE [LARGE SCALE GENOMIC DNA]</scope>
</reference>
<reference key="6">
    <citation type="journal article" date="2004" name="Genome Res.">
        <title>The status, quality, and expansion of the NIH full-length cDNA project: the Mammalian Gene Collection (MGC).</title>
        <authorList>
            <consortium name="The MGC Project Team"/>
        </authorList>
    </citation>
    <scope>NUCLEOTIDE SEQUENCE [LARGE SCALE MRNA] (ISOFORMS 1 AND 2)</scope>
</reference>
<reference key="7">
    <citation type="submission" date="1998-04" db="EMBL/GenBank/DDBJ databases">
        <title>Transcription map in Xp11.23.</title>
        <authorList>
            <person name="Strom T.M."/>
            <person name="Nyakatura G."/>
            <person name="Hellebrand H."/>
            <person name="Drescher B."/>
            <person name="Rosenthal A."/>
            <person name="Meindl A."/>
        </authorList>
    </citation>
    <scope>NUCLEOTIDE SEQUENCE [LARGE SCALE MRNA] OF 16-431 (ISOFORM 3)</scope>
</reference>
<reference key="8">
    <citation type="journal article" date="2005" name="Proc. Natl. Acad. Sci. U.S.A.">
        <title>Foxp3 interacts with nuclear factor of activated T cells and NF-kappa B to repress cytokine gene expression and effector functions of T helper cells.</title>
        <authorList>
            <person name="Bettelli E."/>
            <person name="Dastrange M."/>
            <person name="Oukka M."/>
        </authorList>
    </citation>
    <scope>FUNCTION</scope>
    <scope>INTERACTION WITH RELA AND NFATC2</scope>
</reference>
<reference key="9">
    <citation type="journal article" date="2007" name="Nature">
        <title>Foxp3 controls regulatory T-cell function by interacting with AML1/Runx1.</title>
        <authorList>
            <person name="Ono M."/>
            <person name="Yaguchi H."/>
            <person name="Ohkura N."/>
            <person name="Kitabayashi I."/>
            <person name="Nagamura Y."/>
            <person name="Nomura T."/>
            <person name="Miyachi Y."/>
            <person name="Tsukada T."/>
            <person name="Sakaguchi S."/>
        </authorList>
    </citation>
    <scope>FUNCTION</scope>
    <scope>INTERACTION WITH RUNX1</scope>
</reference>
<reference key="10">
    <citation type="journal article" date="2007" name="Proc. Natl. Acad. Sci. U.S.A.">
        <title>FOXP3 interactions with histone acetyltransferase and class II histone deacetylases are required for repression.</title>
        <authorList>
            <person name="Li B."/>
            <person name="Samanta A."/>
            <person name="Song X."/>
            <person name="Iacono K.T."/>
            <person name="Bembas K."/>
            <person name="Tao R."/>
            <person name="Basu S."/>
            <person name="Riley J.L."/>
            <person name="Hancock W.W."/>
            <person name="Shen Y."/>
            <person name="Saouaf S.J."/>
            <person name="Greene M.I."/>
        </authorList>
    </citation>
    <scope>FUNCTION</scope>
    <scope>ACETYLATION</scope>
    <scope>INTERACTION WITH KAT5; HDAC7 AND HDAC9</scope>
    <scope>SUBCELLULAR LOCATION</scope>
</reference>
<reference key="11">
    <citation type="journal article" date="2008" name="J. Immunol.">
        <title>Isoform-specific inhibition of ROR alpha-mediated transcriptional activation by human FOXP3.</title>
        <authorList>
            <person name="Du J."/>
            <person name="Huang C."/>
            <person name="Zhou B."/>
            <person name="Ziegler S.F."/>
        </authorList>
    </citation>
    <scope>FUNCTION</scope>
    <scope>INTERACTION WITH RORA</scope>
    <scope>SUBCELLULAR LOCATION</scope>
    <scope>MUTAGENESIS OF 95-LEU-LEU-96</scope>
</reference>
<reference key="12">
    <citation type="journal article" date="2008" name="Nature">
        <title>TGF-beta-induced Foxp3 inhibits T(H)17 cell differentiation by antagonizing RORgammat function.</title>
        <authorList>
            <person name="Zhou L."/>
            <person name="Lopes J.E."/>
            <person name="Chong M.M."/>
            <person name="Ivanov I.I."/>
            <person name="Min R."/>
            <person name="Victora G.D."/>
            <person name="Shen Y."/>
            <person name="Du J."/>
            <person name="Rubtsov Y.P."/>
            <person name="Rudensky A.Y."/>
            <person name="Ziegler S.F."/>
            <person name="Littman D.R."/>
        </authorList>
    </citation>
    <scope>FUNCTION</scope>
    <scope>INTERACTION WITH RORC</scope>
</reference>
<reference key="13">
    <citation type="journal article" date="2009" name="J. Biol. Chem.">
        <title>Foxp3 processing by proprotein convertases and control of regulatory T cell function.</title>
        <authorList>
            <person name="de Zoeten E.F."/>
            <person name="Lee I."/>
            <person name="Wang L."/>
            <person name="Chen C."/>
            <person name="Ge G."/>
            <person name="Wells A.D."/>
            <person name="Hancock W.W."/>
            <person name="Ozkaynak E."/>
        </authorList>
    </citation>
    <scope>PROTEOLYTIC PROCESSING</scope>
</reference>
<reference key="14">
    <citation type="journal article" date="2010" name="Nat. Immunol.">
        <title>Activation of the aryl hydrocarbon receptor induces human type 1 regulatory T cell-like and Foxp3(+) regulatory T cells.</title>
        <authorList>
            <person name="Gandhi R."/>
            <person name="Kumar D."/>
            <person name="Burns E.J."/>
            <person name="Nadeau M."/>
            <person name="Dake B."/>
            <person name="Laroni A."/>
            <person name="Kozoriz D."/>
            <person name="Weiner H.L."/>
            <person name="Quintana F.J."/>
        </authorList>
    </citation>
    <scope>INTERACTION WITH IKZF3</scope>
</reference>
<reference key="15">
    <citation type="journal article" date="2012" name="Eur. J. Immunol.">
        <title>Subcellular localization of FOXP3 in human regulatory and nonregulatory T cells.</title>
        <authorList>
            <person name="Magg T."/>
            <person name="Mannert J."/>
            <person name="Ellwart J.W."/>
            <person name="Schmid I."/>
            <person name="Albert M.H."/>
        </authorList>
    </citation>
    <scope>SUBCELLULAR LOCATION</scope>
    <scope>NUCLEAR LOCALIZATION SIGNAL</scope>
    <scope>NUCLEAR EXPORT SIGNAL</scope>
    <scope>MUTAGENESIS OF LEU-69; LEU-71; LEU-74; LEU-76; 415-LYS-LYS-416; LEU-242; LEU-246 AND LEU-248</scope>
</reference>
<reference key="16">
    <citation type="journal article" date="2012" name="J. Immunol.">
        <title>Three novel acetylation sites in the Foxp3 transcription factor regulate the suppressive activity of regulatory T cells.</title>
        <authorList>
            <person name="Kwon H.S."/>
            <person name="Lim H.W."/>
            <person name="Wu J."/>
            <person name="Schnolzer M."/>
            <person name="Verdin E."/>
            <person name="Ott M."/>
        </authorList>
    </citation>
    <scope>ACETYLATION AT LYS-31; LYS-263 AND LYS-268</scope>
    <scope>DEACETYLATION BY SIRT1</scope>
</reference>
<reference key="17">
    <citation type="journal article" date="2013" name="Blood">
        <title>A novel function for FOXP3 in humans: intrinsic regulation of conventional T cells.</title>
        <authorList>
            <person name="McMurchy A.N."/>
            <person name="Gillies J."/>
            <person name="Gizzi M.C."/>
            <person name="Riba M."/>
            <person name="Garcia-Manteiga J.M."/>
            <person name="Cittaro D."/>
            <person name="Lazarevic D."/>
            <person name="Di Nunzio S."/>
            <person name="Piras I.S."/>
            <person name="Bulfone A."/>
            <person name="Roncarolo M.G."/>
            <person name="Stupka E."/>
            <person name="Bacchetta R."/>
            <person name="Levings M.K."/>
        </authorList>
    </citation>
    <scope>FUNCTION</scope>
</reference>
<reference key="18">
    <citation type="journal article" date="2013" name="Front. Oncol.">
        <title>Searching for the Achilles Heel of FOXP3.</title>
        <authorList>
            <person name="Lozano T."/>
            <person name="Casares N."/>
            <person name="Lasarte J.J."/>
        </authorList>
    </citation>
    <scope>REVIEW</scope>
</reference>
<reference key="19">
    <citation type="journal article" date="2013" name="Immunity">
        <title>Stabilization of the transcription factor Foxp3 by the deubiquitinase USP7 increases Treg-cell-suppressive capacity.</title>
        <authorList>
            <person name="van Loosdregt J."/>
            <person name="Fleskens V."/>
            <person name="Fu J."/>
            <person name="Brenkman A.B."/>
            <person name="Bekker C.P."/>
            <person name="Pals C.E."/>
            <person name="Meerding J."/>
            <person name="Berkers C.R."/>
            <person name="Barbi J."/>
            <person name="Grone A."/>
            <person name="Sijts A.J."/>
            <person name="Maurice M.M."/>
            <person name="Kalkhoven E."/>
            <person name="Prakken B.J."/>
            <person name="Ovaa H."/>
            <person name="Pan F."/>
            <person name="Zaiss D.M."/>
            <person name="Coffer P.J."/>
        </authorList>
    </citation>
    <scope>UBIQUITINATION</scope>
    <scope>DEUBIQUITINATION</scope>
    <scope>SUBCELLULAR LOCATION</scope>
    <scope>INTERACTION WITH USP7</scope>
</reference>
<reference key="20">
    <citation type="journal article" date="2013" name="Immunity">
        <title>The ubiquitin ligase Stub1 negatively modulates regulatory T cell suppressive activity by promoting degradation of the transcription factor Foxp3.</title>
        <authorList>
            <person name="Chen Z."/>
            <person name="Barbi J."/>
            <person name="Bu S."/>
            <person name="Yang H.Y."/>
            <person name="Li Z."/>
            <person name="Gao Y."/>
            <person name="Jinasena D."/>
            <person name="Fu J."/>
            <person name="Lin F."/>
            <person name="Chen C."/>
            <person name="Zhang J."/>
            <person name="Yu N."/>
            <person name="Li X."/>
            <person name="Shan Z."/>
            <person name="Nie J."/>
            <person name="Gao Z."/>
            <person name="Tian H."/>
            <person name="Li Y."/>
            <person name="Yao Z."/>
            <person name="Zheng Y."/>
            <person name="Park B.V."/>
            <person name="Pan Z."/>
            <person name="Zhang J."/>
            <person name="Dang E."/>
            <person name="Li Z."/>
            <person name="Wang H."/>
            <person name="Luo W."/>
            <person name="Li L."/>
            <person name="Semenza G.L."/>
            <person name="Zheng S.G."/>
            <person name="Loser K."/>
            <person name="Tsun A."/>
            <person name="Greene M.I."/>
            <person name="Pardoll D.M."/>
            <person name="Pan F."/>
            <person name="Li B."/>
        </authorList>
    </citation>
    <scope>INTERACTION WITH STUB1; HSPA8 AND HSPA1A/B</scope>
    <scope>SUBCELLULAR LOCATION</scope>
    <scope>UBIQUITINATION</scope>
    <scope>INDUCTION</scope>
</reference>
<reference key="21">
    <citation type="journal article" date="2013" name="J. Immunol.">
        <title>Cutting Edge: a novel, human-specific interacting protein couples FOXP3 to a chromatin-remodeling complex that contains KAP1/TRIM28.</title>
        <authorList>
            <person name="Huang C."/>
            <person name="Martin S."/>
            <person name="Pfleger C."/>
            <person name="Du J."/>
            <person name="Buckner J.H."/>
            <person name="Bluestone J.A."/>
            <person name="Riley J.L."/>
            <person name="Ziegler S.F."/>
        </authorList>
    </citation>
    <scope>INTERACTION WITH ZFP90</scope>
</reference>
<reference key="22">
    <citation type="journal article" date="2013" name="Nat. Med.">
        <title>Phosphorylation of FOXP3 controls regulatory T cell function and is inhibited by TNF-alpha in rheumatoid arthritis.</title>
        <authorList>
            <person name="Nie H."/>
            <person name="Zheng Y."/>
            <person name="Li R."/>
            <person name="Guo T.B."/>
            <person name="He D."/>
            <person name="Fang L."/>
            <person name="Liu X."/>
            <person name="Xiao L."/>
            <person name="Chen X."/>
            <person name="Wan B."/>
            <person name="Chin Y.E."/>
            <person name="Zhang J.Z."/>
        </authorList>
    </citation>
    <scope>PHOSPHORYLATION AT SER-418</scope>
    <scope>SUBCELLULAR LOCATION</scope>
    <scope>INTERACTION WITH PPP1CA; PPP1CB AND PPP1CG</scope>
    <scope>MUTAGENESIS OF SER-418 AND SER-422</scope>
    <scope>DEPHOSPHORYLATION</scope>
</reference>
<reference key="23">
    <citation type="journal article" date="2014" name="Cell Rep.">
        <title>Dynamic interactions between TIP60 and p300 regulate FOXP3 function through a structural switch defined by a single lysine on TIP60.</title>
        <authorList>
            <person name="Xiao Y."/>
            <person name="Nagai Y."/>
            <person name="Deng G."/>
            <person name="Ohtani T."/>
            <person name="Zhu Z."/>
            <person name="Zhou Z."/>
            <person name="Zhang H."/>
            <person name="Ji M.Q."/>
            <person name="Lough J.W."/>
            <person name="Samanta A."/>
            <person name="Hancock W.W."/>
            <person name="Greene M.I."/>
        </authorList>
    </citation>
    <scope>FUNCTION</scope>
    <scope>ACETYLATION</scope>
</reference>
<reference key="24">
    <citation type="journal article" date="2014" name="Int. Rev. Immunol.">
        <title>The role of FOXP3 in regulating immune responses.</title>
        <authorList>
            <person name="Vent-Schmidt J."/>
            <person name="Han J.M."/>
            <person name="MacDonald K.G."/>
            <person name="Levings M.K."/>
        </authorList>
    </citation>
    <scope>REVIEW ON FUNCTION</scope>
</reference>
<reference key="25">
    <citation type="journal article" date="2014" name="Int. Rev. Immunol.">
        <title>Forkhead box P3: the peacekeeper of the immune system.</title>
        <authorList>
            <person name="Passerini L."/>
            <person name="Santoni de Sio F.R."/>
            <person name="Roncarolo M.G."/>
            <person name="Bacchetta R."/>
        </authorList>
    </citation>
    <scope>REVIEW ON FUNCTION</scope>
</reference>
<reference key="26">
    <citation type="journal article" date="2014" name="Nat. Rev. Immunol.">
        <title>FOXP3 and scurfy: how it all began.</title>
        <authorList>
            <person name="Ramsdell F."/>
            <person name="Ziegler S.F."/>
        </authorList>
    </citation>
    <scope>REVIEW</scope>
</reference>
<reference key="27">
    <citation type="journal article" date="2014" name="Trends Immunol.">
        <title>Post-translational modification networks regulating FOXP3 function.</title>
        <authorList>
            <person name="van Loosdregt J."/>
            <person name="Coffer P.J."/>
        </authorList>
    </citation>
    <scope>REVIEW ON PTM</scope>
</reference>
<reference key="28">
    <citation type="journal article" date="2018" name="Dev. Cell">
        <title>AMBRA1 controls regulatory T-cell differentiation and homeostasis upstream of the FOXO3-FOXP3 axis.</title>
        <authorList>
            <person name="Becher J."/>
            <person name="Simula L."/>
            <person name="Volpe E."/>
            <person name="Procaccini C."/>
            <person name="La Rocca C."/>
            <person name="D'Acunzo P."/>
            <person name="Cianfanelli V."/>
            <person name="Strappazzon F."/>
            <person name="Caruana I."/>
            <person name="Nazio F."/>
            <person name="Weber G."/>
            <person name="Gigantino V."/>
            <person name="Botti G."/>
            <person name="Ciccosanti F."/>
            <person name="Borsellino G."/>
            <person name="Campello S."/>
            <person name="Mandolesi G."/>
            <person name="De Bardi M."/>
            <person name="Fimia G.M."/>
            <person name="D'Amelio M."/>
            <person name="Ruffini F."/>
            <person name="Furlan R."/>
            <person name="Centonze D."/>
            <person name="Martino G."/>
            <person name="Braghetta P."/>
            <person name="Chrisam M."/>
            <person name="Bonaldo P."/>
            <person name="Matarese G."/>
            <person name="Locatelli F."/>
            <person name="Battistini L."/>
            <person name="Cecconi F."/>
        </authorList>
    </citation>
    <scope>FUNCTION</scope>
    <scope>INDUCTION</scope>
</reference>
<reference key="29">
    <citation type="journal article" date="2020" name="EMBO Rep.">
        <title>The deubiquitinase USP44 promotes Treg function during inflammation by preventing FOXP3 degradation.</title>
        <authorList>
            <person name="Yang J."/>
            <person name="Wei P."/>
            <person name="Barbi J."/>
            <person name="Huang Q."/>
            <person name="Yang E."/>
            <person name="Bai Y."/>
            <person name="Nie J."/>
            <person name="Gao Y."/>
            <person name="Tao J."/>
            <person name="Lu Y."/>
            <person name="Xie C."/>
            <person name="Hou X."/>
            <person name="Ren J."/>
            <person name="Wu X."/>
            <person name="Meng J."/>
            <person name="Zhang Y."/>
            <person name="Fu J."/>
            <person name="Kou W."/>
            <person name="Gao Y."/>
            <person name="Chen Z."/>
            <person name="Liang R."/>
            <person name="Tsun A."/>
            <person name="Li D."/>
            <person name="Guo W."/>
            <person name="Zhang S."/>
            <person name="Zheng S.G."/>
            <person name="Niu J."/>
            <person name="Galardy P."/>
            <person name="Tong X."/>
            <person name="Shi G."/>
            <person name="Li H."/>
            <person name="Pan F."/>
            <person name="Li B."/>
        </authorList>
    </citation>
    <scope>FUNCTION</scope>
    <scope>DEUBIQUITINATION BY USP44</scope>
    <scope>SUBCELLULAR LOCATION</scope>
</reference>
<reference evidence="37" key="30">
    <citation type="journal article" date="2011" name="Immunity">
        <title>Structure of a domain-swapped FOXP3 dimer on DNA and its function in regulatory T cells.</title>
        <authorList>
            <person name="Bandukwala H.S."/>
            <person name="Wu Y."/>
            <person name="Feuerer M."/>
            <person name="Chen Y."/>
            <person name="Barboza B."/>
            <person name="Ghosh S."/>
            <person name="Stroud J.C."/>
            <person name="Benoist C."/>
            <person name="Mathis D."/>
            <person name="Rao A."/>
            <person name="Chen L."/>
        </authorList>
    </citation>
    <scope>X-RAY CRYSTALLOGRAPHY (2.80 ANGSTROMS) OF 336-417 IN COMPLEX WITH DNA AND NFATC2</scope>
    <scope>FUNCTION</scope>
    <scope>SUBUNIT</scope>
    <scope>DOMAIN FORK-HEAD</scope>
    <scope>INTERACTION WITH NFATC2</scope>
    <scope>CHARACTERIZATION OF VARIANTS IPEX GLU-251 DEL; HIS-347; CYS-371 AND ALA-373</scope>
    <scope>MUTAGENESIS OF TRP-348; MET-370 AND ALA-372</scope>
</reference>
<reference evidence="38" key="31">
    <citation type="journal article" date="2015" name="Nucleic Acids Res.">
        <title>DNA binding by FOXP3 domain-swapped dimer suggests mechanisms of long-range chromosomal interactions.</title>
        <authorList>
            <person name="Chen Y."/>
            <person name="Chen C."/>
            <person name="Zhang Z."/>
            <person name="Liu C.C."/>
            <person name="Johnson M.E."/>
            <person name="Espinoza C.A."/>
            <person name="Edsall L.E."/>
            <person name="Ren B."/>
            <person name="Zhou X.J."/>
            <person name="Grant S.F."/>
            <person name="Wells A.D."/>
            <person name="Chen L."/>
        </authorList>
    </citation>
    <scope>X-RAY CRYSTALLOGRAPHY (3.40 ANGSTROMS) OF 336-417 IN COMPLEX WITH DNA</scope>
    <scope>FUNCTION</scope>
    <scope>SUBUNIT</scope>
</reference>
<reference key="32">
    <citation type="journal article" date="2000" name="J. Clin. Invest.">
        <title>JM2, encoding a fork head-related protein, is mutated in X-linked autoimmunity-allergic disregulation syndrome.</title>
        <authorList>
            <person name="Chatila T.A."/>
            <person name="Blaeser F."/>
            <person name="Ho N."/>
            <person name="Lederman H.M."/>
            <person name="Voulgaropoulos C."/>
            <person name="Helms C."/>
            <person name="Bowcock A.M."/>
        </authorList>
    </citation>
    <scope>VARIANT IPEX GLU-251 DEL</scope>
</reference>
<reference key="33">
    <citation type="journal article" date="2001" name="J. Med. Genet.">
        <title>Novel mutations of FOXP3 in two Japanese patients with immune dysregulation, polyendocrinopathy, enteropathy, X linked syndrome (IPEX).</title>
        <authorList>
            <person name="Kobayashi I."/>
            <person name="Shiari R."/>
            <person name="Yamada M."/>
            <person name="Kawamura N."/>
            <person name="Okano M."/>
            <person name="Yara A."/>
            <person name="Iguchi A."/>
            <person name="Ishikawa N."/>
            <person name="Ariga T."/>
            <person name="Sakiyama Y."/>
            <person name="Ochs H.D."/>
            <person name="Kobayashi K."/>
        </authorList>
    </citation>
    <scope>VARIANT IPEX VAL-363</scope>
</reference>
<reference key="34">
    <citation type="journal article" date="2001" name="Nat. Genet.">
        <title>X-linked neonatal diabetes mellitus, enteropathy and endocrinopathy syndrome is the human equivalent of mouse scurfy.</title>
        <authorList>
            <person name="Wildin R.S."/>
            <person name="Ramsdell F."/>
            <person name="Peake J."/>
            <person name="Faravelli F."/>
            <person name="Casanova J.-L."/>
            <person name="Buist N."/>
            <person name="Levy-Lahad E."/>
            <person name="Mazzella M."/>
            <person name="Goulet O."/>
            <person name="Perroni L."/>
            <person name="Bricarelli F.D."/>
            <person name="Byrne G."/>
            <person name="McEuen M."/>
            <person name="Proll S."/>
            <person name="Appleby M."/>
            <person name="Brunkow M.E."/>
        </authorList>
    </citation>
    <scope>VARIANTS IPEX CYS-371; THR-384 AND TRP-397</scope>
</reference>
<reference key="35">
    <citation type="journal article" date="2001" name="Nat. Genet.">
        <title>The immune dysregulation, polyendocrinopathy, enteropathy, X-linked syndrome (IPEX) is caused by mutations of FOXP3.</title>
        <authorList>
            <person name="Bennett C.L."/>
            <person name="Christie J."/>
            <person name="Ramsdell F."/>
            <person name="Brunkow M.E."/>
            <person name="Ferguson P.J."/>
            <person name="Whitesell L."/>
            <person name="Kelly T.E."/>
            <person name="Saulsbury F.T."/>
            <person name="Chance P.F."/>
            <person name="Ochs H.D."/>
        </authorList>
    </citation>
    <scope>VARIANT IPEX THR-384</scope>
</reference>
<reference key="36">
    <citation type="journal article" date="2008" name="J. Allergy Clin. Immunol.">
        <title>Clinical and molecular profile of a new series of patients with immune dysregulation, polyendocrinopathy, enteropathy, X-linked syndrome: inconsistent correlation between forkhead box protein 3 expression and disease severity.</title>
        <authorList>
            <person name="Gambineri E."/>
            <person name="Perroni L."/>
            <person name="Passerini L."/>
            <person name="Bianchi L."/>
            <person name="Doglioni C."/>
            <person name="Meschi F."/>
            <person name="Bonfanti R."/>
            <person name="Sznajer Y."/>
            <person name="Tommasini A."/>
            <person name="Lawitschka A."/>
            <person name="Junker A."/>
            <person name="Dunstheimer D."/>
            <person name="Heidemann P.H."/>
            <person name="Cazzola G."/>
            <person name="Cipolli M."/>
            <person name="Friedrich W."/>
            <person name="Janic D."/>
            <person name="Azzi N."/>
            <person name="Richmond E."/>
            <person name="Vignola S."/>
            <person name="Barabino A."/>
            <person name="Chiumello G."/>
            <person name="Azzari C."/>
            <person name="Roncarolo M.G."/>
            <person name="Bacchetta R."/>
        </authorList>
    </citation>
    <scope>VARIANTS IPEX PRO-242; LEU-324; ALA-339; HIS-347; ALA-373; CYS-374 AND THR-384</scope>
    <scope>CHARACTERIZATION OF VARIANTS IPEX PRO-242; LEU-324; ALA-339; HIS-347; ALA-373; CYS-374 AND THR-384</scope>
</reference>
<evidence type="ECO:0000250" key="1">
    <source>
        <dbReference type="UniProtKB" id="Q99JB6"/>
    </source>
</evidence>
<evidence type="ECO:0000255" key="2">
    <source>
        <dbReference type="PROSITE-ProRule" id="PRU00089"/>
    </source>
</evidence>
<evidence type="ECO:0000256" key="3">
    <source>
        <dbReference type="SAM" id="MobiDB-lite"/>
    </source>
</evidence>
<evidence type="ECO:0000269" key="4">
    <source>
    </source>
</evidence>
<evidence type="ECO:0000269" key="5">
    <source>
    </source>
</evidence>
<evidence type="ECO:0000269" key="6">
    <source>
    </source>
</evidence>
<evidence type="ECO:0000269" key="7">
    <source>
    </source>
</evidence>
<evidence type="ECO:0000269" key="8">
    <source>
    </source>
</evidence>
<evidence type="ECO:0000269" key="9">
    <source>
    </source>
</evidence>
<evidence type="ECO:0000269" key="10">
    <source>
    </source>
</evidence>
<evidence type="ECO:0000269" key="11">
    <source>
    </source>
</evidence>
<evidence type="ECO:0000269" key="12">
    <source>
    </source>
</evidence>
<evidence type="ECO:0000269" key="13">
    <source>
    </source>
</evidence>
<evidence type="ECO:0000269" key="14">
    <source>
    </source>
</evidence>
<evidence type="ECO:0000269" key="15">
    <source>
    </source>
</evidence>
<evidence type="ECO:0000269" key="16">
    <source>
    </source>
</evidence>
<evidence type="ECO:0000269" key="17">
    <source>
    </source>
</evidence>
<evidence type="ECO:0000269" key="18">
    <source>
    </source>
</evidence>
<evidence type="ECO:0000269" key="19">
    <source>
    </source>
</evidence>
<evidence type="ECO:0000269" key="20">
    <source>
    </source>
</evidence>
<evidence type="ECO:0000269" key="21">
    <source>
    </source>
</evidence>
<evidence type="ECO:0000269" key="22">
    <source>
    </source>
</evidence>
<evidence type="ECO:0000269" key="23">
    <source>
    </source>
</evidence>
<evidence type="ECO:0000269" key="24">
    <source>
    </source>
</evidence>
<evidence type="ECO:0000269" key="25">
    <source>
    </source>
</evidence>
<evidence type="ECO:0000269" key="26">
    <source>
    </source>
</evidence>
<evidence type="ECO:0000269" key="27">
    <source>
    </source>
</evidence>
<evidence type="ECO:0000303" key="28">
    <source>
    </source>
</evidence>
<evidence type="ECO:0000303" key="29">
    <source>
    </source>
</evidence>
<evidence type="ECO:0000303" key="30">
    <source>
    </source>
</evidence>
<evidence type="ECO:0000303" key="31">
    <source>
    </source>
</evidence>
<evidence type="ECO:0000303" key="32">
    <source ref="3"/>
</evidence>
<evidence type="ECO:0000303" key="33">
    <source ref="4"/>
</evidence>
<evidence type="ECO:0000303" key="34">
    <source ref="7"/>
</evidence>
<evidence type="ECO:0000305" key="35"/>
<evidence type="ECO:0000305" key="36">
    <source>
    </source>
</evidence>
<evidence type="ECO:0007744" key="37">
    <source>
        <dbReference type="PDB" id="3QRF"/>
    </source>
</evidence>
<evidence type="ECO:0007744" key="38">
    <source>
        <dbReference type="PDB" id="4WK8"/>
    </source>
</evidence>
<evidence type="ECO:0007829" key="39">
    <source>
        <dbReference type="PDB" id="3QRF"/>
    </source>
</evidence>